<keyword id="KW-0002">3D-structure</keyword>
<keyword id="KW-0007">Acetylation</keyword>
<keyword id="KW-0963">Cytoplasm</keyword>
<keyword id="KW-0903">Direct protein sequencing</keyword>
<keyword id="KW-0225">Disease variant</keyword>
<keyword id="KW-0887">Epilepsy</keyword>
<keyword id="KW-0496">Mitochondrion</keyword>
<keyword id="KW-0597">Phosphoprotein</keyword>
<keyword id="KW-1267">Proteomics identification</keyword>
<keyword id="KW-1185">Reference proteome</keyword>
<protein>
    <recommendedName>
        <fullName evidence="30">14-3-3 protein gamma</fullName>
    </recommendedName>
    <alternativeName>
        <fullName>Protein kinase C inhibitor protein 1</fullName>
        <shortName>KCIP-1</shortName>
    </alternativeName>
    <component>
        <recommendedName>
            <fullName>14-3-3 protein gamma, N-terminally processed</fullName>
        </recommendedName>
    </component>
</protein>
<dbReference type="EMBL" id="AF142498">
    <property type="protein sequence ID" value="AAD48408.1"/>
    <property type="molecule type" value="mRNA"/>
</dbReference>
<dbReference type="EMBL" id="AB024334">
    <property type="protein sequence ID" value="BAA85184.1"/>
    <property type="molecule type" value="mRNA"/>
</dbReference>
<dbReference type="EMBL" id="CR541904">
    <property type="protein sequence ID" value="CAG46702.1"/>
    <property type="molecule type" value="mRNA"/>
</dbReference>
<dbReference type="EMBL" id="CR541925">
    <property type="protein sequence ID" value="CAG46723.1"/>
    <property type="molecule type" value="mRNA"/>
</dbReference>
<dbReference type="EMBL" id="AC006388">
    <property type="status" value="NOT_ANNOTATED_CDS"/>
    <property type="molecule type" value="Genomic_DNA"/>
</dbReference>
<dbReference type="EMBL" id="BC020963">
    <property type="protein sequence ID" value="AAH20963.1"/>
    <property type="molecule type" value="mRNA"/>
</dbReference>
<dbReference type="CCDS" id="CCDS5584.1"/>
<dbReference type="RefSeq" id="NP_036611.2">
    <property type="nucleotide sequence ID" value="NM_012479.3"/>
</dbReference>
<dbReference type="PDB" id="2B05">
    <property type="method" value="X-ray"/>
    <property type="resolution" value="2.55 A"/>
    <property type="chains" value="A/B/C/D/E/F=2-247"/>
</dbReference>
<dbReference type="PDB" id="3UZD">
    <property type="method" value="X-ray"/>
    <property type="resolution" value="1.86 A"/>
    <property type="chains" value="A=1-247"/>
</dbReference>
<dbReference type="PDB" id="4E2E">
    <property type="method" value="X-ray"/>
    <property type="resolution" value="2.25 A"/>
    <property type="chains" value="A=1-247"/>
</dbReference>
<dbReference type="PDB" id="4J6S">
    <property type="method" value="X-ray"/>
    <property type="resolution" value="3.08 A"/>
    <property type="chains" value="A/B/C/D=1-247"/>
</dbReference>
<dbReference type="PDB" id="4O46">
    <property type="method" value="X-ray"/>
    <property type="resolution" value="2.90 A"/>
    <property type="chains" value="A/B/C/D/E/F=1-247"/>
</dbReference>
<dbReference type="PDB" id="5D3E">
    <property type="method" value="X-ray"/>
    <property type="resolution" value="2.75 A"/>
    <property type="chains" value="A/B/E/F/I/J=1-238"/>
</dbReference>
<dbReference type="PDB" id="6A5S">
    <property type="method" value="X-ray"/>
    <property type="resolution" value="2.10 A"/>
    <property type="chains" value="A/B/D/G=1-247"/>
</dbReference>
<dbReference type="PDB" id="6BYJ">
    <property type="method" value="X-ray"/>
    <property type="resolution" value="2.90 A"/>
    <property type="chains" value="A/B/C/D/E/F=2-241"/>
</dbReference>
<dbReference type="PDB" id="6BYL">
    <property type="method" value="X-ray"/>
    <property type="resolution" value="3.35 A"/>
    <property type="chains" value="A/B/C/D/E/F=2-241"/>
</dbReference>
<dbReference type="PDB" id="6BZD">
    <property type="method" value="X-ray"/>
    <property type="resolution" value="2.67 A"/>
    <property type="chains" value="A/B/C/D=2-247"/>
</dbReference>
<dbReference type="PDB" id="6FEL">
    <property type="method" value="X-ray"/>
    <property type="resolution" value="2.84 A"/>
    <property type="chains" value="A/B/C/D=1-234"/>
</dbReference>
<dbReference type="PDB" id="6GKF">
    <property type="method" value="X-ray"/>
    <property type="resolution" value="2.60 A"/>
    <property type="chains" value="A/B/C/D/E/F/G/H=1-234"/>
</dbReference>
<dbReference type="PDB" id="6GKG">
    <property type="method" value="X-ray"/>
    <property type="resolution" value="2.85 A"/>
    <property type="chains" value="A/B/C/D/E/F/G/H=1-234"/>
</dbReference>
<dbReference type="PDB" id="6S9K">
    <property type="method" value="X-ray"/>
    <property type="resolution" value="1.60 A"/>
    <property type="chains" value="A=1-234"/>
</dbReference>
<dbReference type="PDB" id="6SAD">
    <property type="method" value="X-ray"/>
    <property type="resolution" value="2.75 A"/>
    <property type="chains" value="A/B=1-234"/>
</dbReference>
<dbReference type="PDB" id="6Y4K">
    <property type="method" value="X-ray"/>
    <property type="resolution" value="3.00 A"/>
    <property type="chains" value="A/B=1-234"/>
</dbReference>
<dbReference type="PDB" id="6Y6B">
    <property type="method" value="X-ray"/>
    <property type="resolution" value="3.08 A"/>
    <property type="chains" value="A/B=1-234"/>
</dbReference>
<dbReference type="PDB" id="6ZBT">
    <property type="method" value="X-ray"/>
    <property type="resolution" value="1.80 A"/>
    <property type="chains" value="A/B/C/D=1-234"/>
</dbReference>
<dbReference type="PDB" id="6ZC9">
    <property type="method" value="X-ray"/>
    <property type="resolution" value="1.90 A"/>
    <property type="chains" value="A/B/C/D=1-234"/>
</dbReference>
<dbReference type="PDB" id="7A6R">
    <property type="method" value="X-ray"/>
    <property type="resolution" value="2.70 A"/>
    <property type="chains" value="A/B/C/D=1-234"/>
</dbReference>
<dbReference type="PDB" id="7A6Y">
    <property type="method" value="X-ray"/>
    <property type="resolution" value="2.50 A"/>
    <property type="chains" value="A/B/C/D=1-234"/>
</dbReference>
<dbReference type="PDBsum" id="2B05"/>
<dbReference type="PDBsum" id="3UZD"/>
<dbReference type="PDBsum" id="4E2E"/>
<dbReference type="PDBsum" id="4J6S"/>
<dbReference type="PDBsum" id="4O46"/>
<dbReference type="PDBsum" id="5D3E"/>
<dbReference type="PDBsum" id="6A5S"/>
<dbReference type="PDBsum" id="6BYJ"/>
<dbReference type="PDBsum" id="6BYL"/>
<dbReference type="PDBsum" id="6BZD"/>
<dbReference type="PDBsum" id="6FEL"/>
<dbReference type="PDBsum" id="6GKF"/>
<dbReference type="PDBsum" id="6GKG"/>
<dbReference type="PDBsum" id="6S9K"/>
<dbReference type="PDBsum" id="6SAD"/>
<dbReference type="PDBsum" id="6Y4K"/>
<dbReference type="PDBsum" id="6Y6B"/>
<dbReference type="PDBsum" id="6ZBT"/>
<dbReference type="PDBsum" id="6ZC9"/>
<dbReference type="PDBsum" id="7A6R"/>
<dbReference type="PDBsum" id="7A6Y"/>
<dbReference type="SASBDB" id="P61981"/>
<dbReference type="SMR" id="P61981"/>
<dbReference type="BioGRID" id="113364">
    <property type="interactions" value="1269"/>
</dbReference>
<dbReference type="CORUM" id="P61981"/>
<dbReference type="DIP" id="DIP-33406N"/>
<dbReference type="ELM" id="P61981"/>
<dbReference type="FunCoup" id="P61981">
    <property type="interactions" value="2844"/>
</dbReference>
<dbReference type="IntAct" id="P61981">
    <property type="interactions" value="1673"/>
</dbReference>
<dbReference type="MINT" id="P61981"/>
<dbReference type="STRING" id="9606.ENSP00000306330"/>
<dbReference type="BindingDB" id="P61981"/>
<dbReference type="ChEMBL" id="CHEMBL1293296"/>
<dbReference type="TCDB" id="8.A.98.1.11">
    <property type="family name" value="the 14-3-3 protein (14-3-3) family"/>
</dbReference>
<dbReference type="GlyGen" id="P61981">
    <property type="glycosylation" value="2 sites, 1 N-linked glycan (1 site), 1 O-linked glycan (1 site)"/>
</dbReference>
<dbReference type="iPTMnet" id="P61981"/>
<dbReference type="MetOSite" id="P61981"/>
<dbReference type="PhosphoSitePlus" id="P61981"/>
<dbReference type="SwissPalm" id="P61981"/>
<dbReference type="BioMuta" id="YWHAG"/>
<dbReference type="DMDM" id="48428721"/>
<dbReference type="REPRODUCTION-2DPAGE" id="IPI00220642"/>
<dbReference type="CPTAC" id="CPTAC-450"/>
<dbReference type="CPTAC" id="CPTAC-451"/>
<dbReference type="jPOST" id="P61981"/>
<dbReference type="MassIVE" id="P61981"/>
<dbReference type="PaxDb" id="9606-ENSP00000306330"/>
<dbReference type="PeptideAtlas" id="P61981"/>
<dbReference type="PRIDE" id="P61981"/>
<dbReference type="ProteomicsDB" id="57355"/>
<dbReference type="Pumba" id="P61981"/>
<dbReference type="TopDownProteomics" id="P61981"/>
<dbReference type="Antibodypedia" id="4339">
    <property type="antibodies" value="568 antibodies from 42 providers"/>
</dbReference>
<dbReference type="DNASU" id="7532"/>
<dbReference type="Ensembl" id="ENST00000307630.5">
    <property type="protein sequence ID" value="ENSP00000306330.3"/>
    <property type="gene ID" value="ENSG00000170027.7"/>
</dbReference>
<dbReference type="GeneID" id="7532"/>
<dbReference type="KEGG" id="hsa:7532"/>
<dbReference type="MANE-Select" id="ENST00000307630.5">
    <property type="protein sequence ID" value="ENSP00000306330.3"/>
    <property type="RefSeq nucleotide sequence ID" value="NM_012479.4"/>
    <property type="RefSeq protein sequence ID" value="NP_036611.2"/>
</dbReference>
<dbReference type="UCSC" id="uc011kgj.2">
    <property type="organism name" value="human"/>
</dbReference>
<dbReference type="AGR" id="HGNC:12852"/>
<dbReference type="CTD" id="7532"/>
<dbReference type="DisGeNET" id="7532"/>
<dbReference type="GeneCards" id="YWHAG"/>
<dbReference type="HGNC" id="HGNC:12852">
    <property type="gene designation" value="YWHAG"/>
</dbReference>
<dbReference type="HPA" id="ENSG00000170027">
    <property type="expression patterns" value="Tissue enhanced (brain, skeletal muscle)"/>
</dbReference>
<dbReference type="MalaCards" id="YWHAG"/>
<dbReference type="MIM" id="605356">
    <property type="type" value="gene"/>
</dbReference>
<dbReference type="MIM" id="617665">
    <property type="type" value="phenotype"/>
</dbReference>
<dbReference type="neXtProt" id="NX_P61981"/>
<dbReference type="OpenTargets" id="ENSG00000170027"/>
<dbReference type="Orphanet" id="442835">
    <property type="disease" value="Non-specific early-onset epileptic encephalopathy"/>
</dbReference>
<dbReference type="PharmGKB" id="PA37441"/>
<dbReference type="VEuPathDB" id="HostDB:ENSG00000170027"/>
<dbReference type="eggNOG" id="KOG0841">
    <property type="taxonomic scope" value="Eukaryota"/>
</dbReference>
<dbReference type="GeneTree" id="ENSGT01090000260040"/>
<dbReference type="HOGENOM" id="CLU_058290_0_0_1"/>
<dbReference type="InParanoid" id="P61981"/>
<dbReference type="OMA" id="AYGEAHE"/>
<dbReference type="OrthoDB" id="10260625at2759"/>
<dbReference type="PAN-GO" id="P61981">
    <property type="GO annotations" value="4 GO annotations based on evolutionary models"/>
</dbReference>
<dbReference type="PhylomeDB" id="P61981"/>
<dbReference type="TreeFam" id="TF102003"/>
<dbReference type="PathwayCommons" id="P61981"/>
<dbReference type="Reactome" id="R-HSA-111447">
    <property type="pathway name" value="Activation of BAD and translocation to mitochondria"/>
</dbReference>
<dbReference type="Reactome" id="R-HSA-1445148">
    <property type="pathway name" value="Translocation of SLC2A4 (GLUT4) to the plasma membrane"/>
</dbReference>
<dbReference type="Reactome" id="R-HSA-2565942">
    <property type="pathway name" value="Regulation of PLK1 Activity at G2/M Transition"/>
</dbReference>
<dbReference type="Reactome" id="R-HSA-380259">
    <property type="pathway name" value="Loss of Nlp from mitotic centrosomes"/>
</dbReference>
<dbReference type="Reactome" id="R-HSA-380270">
    <property type="pathway name" value="Recruitment of mitotic centrosome proteins and complexes"/>
</dbReference>
<dbReference type="Reactome" id="R-HSA-380284">
    <property type="pathway name" value="Loss of proteins required for interphase microtubule organization from the centrosome"/>
</dbReference>
<dbReference type="Reactome" id="R-HSA-380320">
    <property type="pathway name" value="Recruitment of NuMA to mitotic centrosomes"/>
</dbReference>
<dbReference type="Reactome" id="R-HSA-5620912">
    <property type="pathway name" value="Anchoring of the basal body to the plasma membrane"/>
</dbReference>
<dbReference type="Reactome" id="R-HSA-5625740">
    <property type="pathway name" value="RHO GTPases activate PKNs"/>
</dbReference>
<dbReference type="Reactome" id="R-HSA-5628897">
    <property type="pathway name" value="TP53 Regulates Metabolic Genes"/>
</dbReference>
<dbReference type="Reactome" id="R-HSA-75035">
    <property type="pathway name" value="Chk1/Chk2(Cds1) mediated inactivation of Cyclin B:Cdk1 complex"/>
</dbReference>
<dbReference type="Reactome" id="R-HSA-8854518">
    <property type="pathway name" value="AURKA Activation by TPX2"/>
</dbReference>
<dbReference type="Reactome" id="R-HSA-9614399">
    <property type="pathway name" value="Regulation of localization of FOXO transcription factors"/>
</dbReference>
<dbReference type="Reactome" id="R-HSA-9735871">
    <property type="pathway name" value="SARS-CoV-1 targets host intracellular signalling and regulatory pathways"/>
</dbReference>
<dbReference type="Reactome" id="R-HSA-9755779">
    <property type="pathway name" value="SARS-CoV-2 targets host intracellular signalling and regulatory pathways"/>
</dbReference>
<dbReference type="Reactome" id="R-HSA-9856649">
    <property type="pathway name" value="Transcriptional and post-translational regulation of MITF-M expression and activity"/>
</dbReference>
<dbReference type="SignaLink" id="P61981"/>
<dbReference type="SIGNOR" id="P61981"/>
<dbReference type="BioGRID-ORCS" id="7532">
    <property type="hits" value="29 hits in 1163 CRISPR screens"/>
</dbReference>
<dbReference type="CD-CODE" id="8C2F96ED">
    <property type="entry name" value="Centrosome"/>
</dbReference>
<dbReference type="CD-CODE" id="FB4E32DD">
    <property type="entry name" value="Presynaptic clusters and postsynaptic densities"/>
</dbReference>
<dbReference type="ChiTaRS" id="YWHAG">
    <property type="organism name" value="human"/>
</dbReference>
<dbReference type="EvolutionaryTrace" id="P61981"/>
<dbReference type="GeneWiki" id="YWHAG"/>
<dbReference type="GenomeRNAi" id="7532"/>
<dbReference type="Pharos" id="P61981">
    <property type="development level" value="Tchem"/>
</dbReference>
<dbReference type="PRO" id="PR:P61981"/>
<dbReference type="Proteomes" id="UP000005640">
    <property type="component" value="Chromosome 7"/>
</dbReference>
<dbReference type="RNAct" id="P61981">
    <property type="molecule type" value="protein"/>
</dbReference>
<dbReference type="Bgee" id="ENSG00000170027">
    <property type="expression patterns" value="Expressed in lateral nuclear group of thalamus and 193 other cell types or tissues"/>
</dbReference>
<dbReference type="GO" id="GO:0005737">
    <property type="term" value="C:cytoplasm"/>
    <property type="evidence" value="ECO:0000250"/>
    <property type="project" value="UniProtKB"/>
</dbReference>
<dbReference type="GO" id="GO:0005829">
    <property type="term" value="C:cytosol"/>
    <property type="evidence" value="ECO:0000314"/>
    <property type="project" value="UniProtKB"/>
</dbReference>
<dbReference type="GO" id="GO:0070062">
    <property type="term" value="C:extracellular exosome"/>
    <property type="evidence" value="ECO:0007005"/>
    <property type="project" value="UniProtKB"/>
</dbReference>
<dbReference type="GO" id="GO:0005925">
    <property type="term" value="C:focal adhesion"/>
    <property type="evidence" value="ECO:0007005"/>
    <property type="project" value="UniProtKB"/>
</dbReference>
<dbReference type="GO" id="GO:0016020">
    <property type="term" value="C:membrane"/>
    <property type="evidence" value="ECO:0007005"/>
    <property type="project" value="UniProtKB"/>
</dbReference>
<dbReference type="GO" id="GO:0005759">
    <property type="term" value="C:mitochondrial matrix"/>
    <property type="evidence" value="ECO:0000314"/>
    <property type="project" value="UniProtKB"/>
</dbReference>
<dbReference type="GO" id="GO:0005634">
    <property type="term" value="C:nucleus"/>
    <property type="evidence" value="ECO:0000314"/>
    <property type="project" value="FlyBase"/>
</dbReference>
<dbReference type="GO" id="GO:0098793">
    <property type="term" value="C:presynapse"/>
    <property type="evidence" value="ECO:0007669"/>
    <property type="project" value="Ensembl"/>
</dbReference>
<dbReference type="GO" id="GO:0042802">
    <property type="term" value="F:identical protein binding"/>
    <property type="evidence" value="ECO:0000353"/>
    <property type="project" value="IntAct"/>
</dbReference>
<dbReference type="GO" id="GO:0005159">
    <property type="term" value="F:insulin-like growth factor receptor binding"/>
    <property type="evidence" value="ECO:0000353"/>
    <property type="project" value="UniProtKB"/>
</dbReference>
<dbReference type="GO" id="GO:0140031">
    <property type="term" value="F:phosphorylation-dependent protein binding"/>
    <property type="evidence" value="ECO:0000314"/>
    <property type="project" value="UniProtKB"/>
</dbReference>
<dbReference type="GO" id="GO:0019904">
    <property type="term" value="F:protein domain specific binding"/>
    <property type="evidence" value="ECO:0007669"/>
    <property type="project" value="Ensembl"/>
</dbReference>
<dbReference type="GO" id="GO:0005080">
    <property type="term" value="F:protein kinase C binding"/>
    <property type="evidence" value="ECO:0000353"/>
    <property type="project" value="UniProtKB"/>
</dbReference>
<dbReference type="GO" id="GO:0008426">
    <property type="term" value="F:protein kinase C inhibitor activity"/>
    <property type="evidence" value="ECO:0000303"/>
    <property type="project" value="UniProtKB"/>
</dbReference>
<dbReference type="GO" id="GO:0140311">
    <property type="term" value="F:protein sequestering activity"/>
    <property type="evidence" value="ECO:0000314"/>
    <property type="project" value="UniProtKB"/>
</dbReference>
<dbReference type="GO" id="GO:0030971">
    <property type="term" value="F:receptor tyrosine kinase binding"/>
    <property type="evidence" value="ECO:0007669"/>
    <property type="project" value="Ensembl"/>
</dbReference>
<dbReference type="GO" id="GO:0003723">
    <property type="term" value="F:RNA binding"/>
    <property type="evidence" value="ECO:0007005"/>
    <property type="project" value="UniProtKB"/>
</dbReference>
<dbReference type="GO" id="GO:0042149">
    <property type="term" value="P:cellular response to glucose starvation"/>
    <property type="evidence" value="ECO:0000314"/>
    <property type="project" value="UniProt"/>
</dbReference>
<dbReference type="GO" id="GO:0032869">
    <property type="term" value="P:cellular response to insulin stimulus"/>
    <property type="evidence" value="ECO:0007669"/>
    <property type="project" value="Ensembl"/>
</dbReference>
<dbReference type="GO" id="GO:0006469">
    <property type="term" value="P:negative regulation of protein kinase activity"/>
    <property type="evidence" value="ECO:0000303"/>
    <property type="project" value="UniProtKB"/>
</dbReference>
<dbReference type="GO" id="GO:1904262">
    <property type="term" value="P:negative regulation of TORC1 signaling"/>
    <property type="evidence" value="ECO:0000314"/>
    <property type="project" value="UniProt"/>
</dbReference>
<dbReference type="GO" id="GO:0022409">
    <property type="term" value="P:positive regulation of cell-cell adhesion"/>
    <property type="evidence" value="ECO:0000315"/>
    <property type="project" value="UniProtKB"/>
</dbReference>
<dbReference type="GO" id="GO:0050870">
    <property type="term" value="P:positive regulation of T cell activation"/>
    <property type="evidence" value="ECO:0000314"/>
    <property type="project" value="UniProt"/>
</dbReference>
<dbReference type="GO" id="GO:0002842">
    <property type="term" value="P:positive regulation of T cell mediated immune response to tumor cell"/>
    <property type="evidence" value="ECO:0000314"/>
    <property type="project" value="UniProt"/>
</dbReference>
<dbReference type="GO" id="GO:0008104">
    <property type="term" value="P:protein localization"/>
    <property type="evidence" value="ECO:0000318"/>
    <property type="project" value="GO_Central"/>
</dbReference>
<dbReference type="GO" id="GO:0006605">
    <property type="term" value="P:protein targeting"/>
    <property type="evidence" value="ECO:0007669"/>
    <property type="project" value="Ensembl"/>
</dbReference>
<dbReference type="GO" id="GO:0045664">
    <property type="term" value="P:regulation of neuron differentiation"/>
    <property type="evidence" value="ECO:0000315"/>
    <property type="project" value="UniProtKB"/>
</dbReference>
<dbReference type="GO" id="GO:0032880">
    <property type="term" value="P:regulation of protein localization"/>
    <property type="evidence" value="ECO:0000315"/>
    <property type="project" value="UniProtKB"/>
</dbReference>
<dbReference type="GO" id="GO:0009966">
    <property type="term" value="P:regulation of signal transduction"/>
    <property type="evidence" value="ECO:0000303"/>
    <property type="project" value="UniProtKB"/>
</dbReference>
<dbReference type="GO" id="GO:0048167">
    <property type="term" value="P:regulation of synaptic plasticity"/>
    <property type="evidence" value="ECO:0000315"/>
    <property type="project" value="UniProtKB"/>
</dbReference>
<dbReference type="GO" id="GO:0007165">
    <property type="term" value="P:signal transduction"/>
    <property type="evidence" value="ECO:0000318"/>
    <property type="project" value="GO_Central"/>
</dbReference>
<dbReference type="CDD" id="cd10024">
    <property type="entry name" value="14-3-3_gamma"/>
    <property type="match status" value="1"/>
</dbReference>
<dbReference type="FunFam" id="1.20.190.20:FF:000001">
    <property type="entry name" value="14-3-3 gamma 1"/>
    <property type="match status" value="1"/>
</dbReference>
<dbReference type="Gene3D" id="1.20.190.20">
    <property type="entry name" value="14-3-3 domain"/>
    <property type="match status" value="1"/>
</dbReference>
<dbReference type="InterPro" id="IPR000308">
    <property type="entry name" value="14-3-3"/>
</dbReference>
<dbReference type="InterPro" id="IPR023409">
    <property type="entry name" value="14-3-3_CS"/>
</dbReference>
<dbReference type="InterPro" id="IPR036815">
    <property type="entry name" value="14-3-3_dom_sf"/>
</dbReference>
<dbReference type="InterPro" id="IPR023410">
    <property type="entry name" value="14-3-3_domain"/>
</dbReference>
<dbReference type="PANTHER" id="PTHR18860">
    <property type="entry name" value="14-3-3 PROTEIN"/>
    <property type="match status" value="1"/>
</dbReference>
<dbReference type="Pfam" id="PF00244">
    <property type="entry name" value="14-3-3"/>
    <property type="match status" value="1"/>
</dbReference>
<dbReference type="PIRSF" id="PIRSF000868">
    <property type="entry name" value="14-3-3"/>
    <property type="match status" value="1"/>
</dbReference>
<dbReference type="PRINTS" id="PR00305">
    <property type="entry name" value="1433ZETA"/>
</dbReference>
<dbReference type="SMART" id="SM00101">
    <property type="entry name" value="14_3_3"/>
    <property type="match status" value="1"/>
</dbReference>
<dbReference type="SUPFAM" id="SSF48445">
    <property type="entry name" value="14-3-3 protein"/>
    <property type="match status" value="1"/>
</dbReference>
<dbReference type="PROSITE" id="PS00796">
    <property type="entry name" value="1433_1"/>
    <property type="match status" value="1"/>
</dbReference>
<dbReference type="PROSITE" id="PS00797">
    <property type="entry name" value="1433_2"/>
    <property type="match status" value="1"/>
</dbReference>
<name>1433G_HUMAN</name>
<comment type="function">
    <text evidence="10 11 17 23 24 27">Adapter protein implicated in the regulation of a large spectrum of both general and specialized signaling pathways (PubMed:15696159, PubMed:16511572, PubMed:36732624). Binds to a large number of partners, usually by recognition of a phosphoserine or phosphothreonine motif (PubMed:15696159, PubMed:16511572, PubMed:36732624). Binding generally results in the modulation of the activity of the binding partner (PubMed:16511572). Promotes inactivation of WDR24 component of the GATOR2 complex by binding to phosphorylated WDR24 (PubMed:36732624). Participates in the positive regulation of NMDA glutamate receptor activity by promoting the L-glutamate secretion through interaction with BEST1 (PubMed:29121962). Reduces keratinocyte intercellular adhesion, via interacting with PKP1 and sequestering it in the cytoplasm, thereby reducing its incorporation into desmosomes (PubMed:29678907). Plays a role in mitochondrial protein catabolic process (also named MALM) that promotes the degradation of damaged proteins inside mitochondria (PubMed:22532927).</text>
</comment>
<comment type="subunit">
    <text evidence="1 3 5 8 9 10 11 12 13 14 15 16 17 18 19 20 21 23 24 25 26 27">Homodimer (PubMed:17085597). Part of a complex that contains DSG3, PKP1, YAP1 and YWHAG; the complex is required for localization of DSG3 and YAP1 to the cell membrane in keratinocytes (PubMed:31835537). Interacts with SAMSN1 (By similarity). Interacts with RAF1, SSH1 and CRTC2/TORC2 (PubMed:10433554, PubMed:15159416, PubMed:15454081). Interacts with ABL1 (phosphorylated form); the interaction retains it in the cytoplasm (PubMed:15696159). Interacts with GAB2 (PubMed:19172738). Interacts with MDM4 (phosphorylated); negatively regulates MDM4 activity toward TP53 (PubMed:16511572). Interacts with PKA-phosphorylated AANAT and SIRT2 (PubMed:11427721, PubMed:18249187). Interacts with the 'Thr-369' phosphorylated form of DAPK2 (PubMed:26047703). Interacts with PI4KB, TBC1D22A and TBC1D22B (PubMed:23572552). Interacts with SLITRK1 (PubMed:19640509). Interacts with LRRK2; this interaction is dependent on LRRK2 phosphorylation (PubMed:28202711). Interacts with MARK2 and MARK3 (PubMed:16959763). Interacts with MEFV (PubMed:27030597). Interacts with ENDOG, TSC2 and PIK3C3; interaction with ENDOG weakens its interaction with TSC2 and PIK3C3 (PubMed:33473107). Interacts with (phosphorylated) WDR24 (PubMed:36732624). Interacts with BEST1; this interaction promotes L-glutamate channel activity leading to the positive regulation of NMDA glutamate receptor activity through the L-glutamate secretion (PubMed:29121962). Interacts with PKP1 (when phosphorylated); the interaction results in translocation of PKP1 to the cytoplasm and loss of intercellular adhesion in keratinocytes (PubMed:29678907). Interacts with SPATA18/MIEAP (isoforms 1 and 2); a protein that also plays a role in MALM (PubMed:22532927).</text>
</comment>
<comment type="interaction">
    <interactant intactId="EBI-359832">
        <id>P61981</id>
    </interactant>
    <interactant intactId="EBI-375543">
        <id>P00519</id>
        <label>ABL1</label>
    </interactant>
    <organismsDiffer>false</organismsDiffer>
    <experiments>8</experiments>
</comment>
<comment type="interaction">
    <interactant intactId="EBI-359832">
        <id>P61981</id>
    </interactant>
    <interactant intactId="EBI-751746">
        <id>Q15027</id>
        <label>ACAP1</label>
    </interactant>
    <organismsDiffer>false</organismsDiffer>
    <experiments>3</experiments>
</comment>
<comment type="interaction">
    <interactant intactId="EBI-359832">
        <id>P61981</id>
    </interactant>
    <interactant intactId="EBI-1045357">
        <id>Q9NPJ3</id>
        <label>ACOT13</label>
    </interactant>
    <organismsDiffer>false</organismsDiffer>
    <experiments>3</experiments>
</comment>
<comment type="interaction">
    <interactant intactId="EBI-359832">
        <id>P61981</id>
    </interactant>
    <interactant intactId="EBI-25833200">
        <id>Q8IWZ3-3</id>
        <label>ANKHD1</label>
    </interactant>
    <organismsDiffer>false</organismsDiffer>
    <experiments>3</experiments>
</comment>
<comment type="interaction">
    <interactant intactId="EBI-359832">
        <id>P61981</id>
    </interactant>
    <interactant intactId="EBI-3447299">
        <id>O43307</id>
        <label>ARHGEF9</label>
    </interactant>
    <organismsDiffer>false</organismsDiffer>
    <experiments>3</experiments>
</comment>
<comment type="interaction">
    <interactant intactId="EBI-359832">
        <id>P61981</id>
    </interactant>
    <interactant intactId="EBI-5280499">
        <id>Q66PJ3-4</id>
        <label>ARL6IP4</label>
    </interactant>
    <organismsDiffer>false</organismsDiffer>
    <experiments>3</experiments>
</comment>
<comment type="interaction">
    <interactant intactId="EBI-359832">
        <id>P61981</id>
    </interactant>
    <interactant intactId="EBI-2323092">
        <id>Q9Y576</id>
        <label>ASB1</label>
    </interactant>
    <organismsDiffer>false</organismsDiffer>
    <experiments>3</experiments>
</comment>
<comment type="interaction">
    <interactant intactId="EBI-359832">
        <id>P61981</id>
    </interactant>
    <interactant intactId="EBI-8994378">
        <id>Q14032</id>
        <label>BAAT</label>
    </interactant>
    <organismsDiffer>false</organismsDiffer>
    <experiments>3</experiments>
</comment>
<comment type="interaction">
    <interactant intactId="EBI-359832">
        <id>P61981</id>
    </interactant>
    <interactant intactId="EBI-700771">
        <id>Q92934</id>
        <label>BAD</label>
    </interactant>
    <organismsDiffer>false</organismsDiffer>
    <experiments>7</experiments>
</comment>
<comment type="interaction">
    <interactant intactId="EBI-359832">
        <id>P61981</id>
    </interactant>
    <interactant intactId="EBI-25884811">
        <id>Q13072</id>
        <label>BAGE</label>
    </interactant>
    <organismsDiffer>false</organismsDiffer>
    <experiments>3</experiments>
</comment>
<comment type="interaction">
    <interactant intactId="EBI-359832">
        <id>P61981</id>
    </interactant>
    <interactant intactId="EBI-11524452">
        <id>Q8N9N5-2</id>
        <label>BANP</label>
    </interactant>
    <organismsDiffer>false</organismsDiffer>
    <experiments>3</experiments>
</comment>
<comment type="interaction">
    <interactant intactId="EBI-359832">
        <id>P61981</id>
    </interactant>
    <interactant intactId="EBI-6598617">
        <id>Q6PH81</id>
        <label>C16orf87</label>
    </interactant>
    <organismsDiffer>false</organismsDiffer>
    <experiments>3</experiments>
</comment>
<comment type="interaction">
    <interactant intactId="EBI-359832">
        <id>P61981</id>
    </interactant>
    <interactant intactId="EBI-518228">
        <id>P22681</id>
        <label>CBL</label>
    </interactant>
    <organismsDiffer>false</organismsDiffer>
    <experiments>5</experiments>
</comment>
<comment type="interaction">
    <interactant intactId="EBI-359832">
        <id>P61981</id>
    </interactant>
    <interactant intactId="EBI-17641690">
        <id>Q96HJ3-2</id>
        <label>CCDC34</label>
    </interactant>
    <organismsDiffer>false</organismsDiffer>
    <experiments>3</experiments>
</comment>
<comment type="interaction">
    <interactant intactId="EBI-359832">
        <id>P61981</id>
    </interactant>
    <interactant intactId="EBI-720151">
        <id>Q96A33</id>
        <label>CCDC47</label>
    </interactant>
    <organismsDiffer>false</organismsDiffer>
    <experiments>3</experiments>
</comment>
<comment type="interaction">
    <interactant intactId="EBI-359832">
        <id>P61981</id>
    </interactant>
    <interactant intactId="EBI-17967022">
        <id>Q96LY2-2</id>
        <label>CCDC74B</label>
    </interactant>
    <organismsDiffer>false</organismsDiffer>
    <experiments>3</experiments>
</comment>
<comment type="interaction">
    <interactant intactId="EBI-359832">
        <id>P61981</id>
    </interactant>
    <interactant intactId="EBI-713148">
        <id>Q9GZT6</id>
        <label>CCDC90B</label>
    </interactant>
    <organismsDiffer>false</organismsDiffer>
    <experiments>3</experiments>
</comment>
<comment type="interaction">
    <interactant intactId="EBI-359832">
        <id>P61981</id>
    </interactant>
    <interactant intactId="EBI-1051746">
        <id>P30305</id>
        <label>CDC25B</label>
    </interactant>
    <organismsDiffer>false</organismsDiffer>
    <experiments>5</experiments>
</comment>
<comment type="interaction">
    <interactant intactId="EBI-359832">
        <id>P61981</id>
    </interactant>
    <interactant intactId="EBI-946194">
        <id>Q9HC77</id>
        <label>CENPJ</label>
    </interactant>
    <organismsDiffer>false</organismsDiffer>
    <experiments>4</experiments>
</comment>
<comment type="interaction">
    <interactant intactId="EBI-359832">
        <id>P61981</id>
    </interactant>
    <interactant intactId="EBI-1210604">
        <id>Q7Z7K6</id>
        <label>CENPV</label>
    </interactant>
    <organismsDiffer>false</organismsDiffer>
    <experiments>3</experiments>
</comment>
<comment type="interaction">
    <interactant intactId="EBI-359832">
        <id>P61981</id>
    </interactant>
    <interactant intactId="EBI-742887">
        <id>Q8TAP6</id>
        <label>CEP76</label>
    </interactant>
    <organismsDiffer>false</organismsDiffer>
    <experiments>3</experiments>
</comment>
<comment type="interaction">
    <interactant intactId="EBI-359832">
        <id>P61981</id>
    </interactant>
    <interactant intactId="EBI-372775">
        <id>Q96GE4</id>
        <label>CEP95</label>
    </interactant>
    <organismsDiffer>false</organismsDiffer>
    <experiments>4</experiments>
</comment>
<comment type="interaction">
    <interactant intactId="EBI-359832">
        <id>P61981</id>
    </interactant>
    <interactant intactId="EBI-3388952">
        <id>Q0VF96</id>
        <label>CGNL1</label>
    </interactant>
    <organismsDiffer>false</organismsDiffer>
    <experiments>5</experiments>
</comment>
<comment type="interaction">
    <interactant intactId="EBI-359832">
        <id>P61981</id>
    </interactant>
    <interactant intactId="EBI-743375">
        <id>Q9NX63</id>
        <label>CHCHD3</label>
    </interactant>
    <organismsDiffer>false</organismsDiffer>
    <experiments>3</experiments>
</comment>
<comment type="interaction">
    <interactant intactId="EBI-359832">
        <id>P61981</id>
    </interactant>
    <interactant intactId="EBI-974488">
        <id>O14757</id>
        <label>CHEK1</label>
    </interactant>
    <organismsDiffer>false</organismsDiffer>
    <experiments>8</experiments>
</comment>
<comment type="interaction">
    <interactant intactId="EBI-359832">
        <id>P61981</id>
    </interactant>
    <interactant intactId="EBI-372594">
        <id>Q99828</id>
        <label>CIB1</label>
    </interactant>
    <organismsDiffer>false</organismsDiffer>
    <experiments>3</experiments>
</comment>
<comment type="interaction">
    <interactant intactId="EBI-359832">
        <id>P61981</id>
    </interactant>
    <interactant intactId="EBI-2116369">
        <id>P15169</id>
        <label>CPN1</label>
    </interactant>
    <organismsDiffer>false</organismsDiffer>
    <experiments>3</experiments>
</comment>
<comment type="interaction">
    <interactant intactId="EBI-359832">
        <id>P61981</id>
    </interactant>
    <interactant intactId="EBI-3453588">
        <id>Q6UUV7</id>
        <label>CRTC3</label>
    </interactant>
    <organismsDiffer>false</organismsDiffer>
    <experiments>7</experiments>
</comment>
<comment type="interaction">
    <interactant intactId="EBI-359832">
        <id>P61981</id>
    </interactant>
    <interactant intactId="EBI-2874283">
        <id>P43234</id>
        <label>CTSO</label>
    </interactant>
    <organismsDiffer>false</organismsDiffer>
    <experiments>3</experiments>
</comment>
<comment type="interaction">
    <interactant intactId="EBI-359832">
        <id>P61981</id>
    </interactant>
    <interactant intactId="EBI-724515">
        <id>O95424</id>
        <label>DEXI</label>
    </interactant>
    <organismsDiffer>false</organismsDiffer>
    <experiments>3</experiments>
</comment>
<comment type="interaction">
    <interactant intactId="EBI-359832">
        <id>P61981</id>
    </interactant>
    <interactant intactId="EBI-748674">
        <id>O43598</id>
        <label>DNPH1</label>
    </interactant>
    <organismsDiffer>false</organismsDiffer>
    <experiments>3</experiments>
</comment>
<comment type="interaction">
    <interactant intactId="EBI-359832">
        <id>P61981</id>
    </interactant>
    <interactant intactId="EBI-6624459">
        <id>P21728</id>
        <label>DRD1</label>
    </interactant>
    <organismsDiffer>false</organismsDiffer>
    <experiments>3</experiments>
</comment>
<comment type="interaction">
    <interactant intactId="EBI-359832">
        <id>P61981</id>
    </interactant>
    <interactant intactId="EBI-347740">
        <id>P60228</id>
        <label>EIF3E</label>
    </interactant>
    <organismsDiffer>false</organismsDiffer>
    <experiments>3</experiments>
</comment>
<comment type="interaction">
    <interactant intactId="EBI-359832">
        <id>P61981</id>
    </interactant>
    <interactant intactId="EBI-1052044">
        <id>O43491</id>
        <label>EPB41L2</label>
    </interactant>
    <organismsDiffer>false</organismsDiffer>
    <experiments>9</experiments>
</comment>
<comment type="interaction">
    <interactant intactId="EBI-359832">
        <id>P61981</id>
    </interactant>
    <interactant intactId="EBI-310986">
        <id>Q9Y2J2</id>
        <label>EPB41L3</label>
    </interactant>
    <organismsDiffer>false</organismsDiffer>
    <experiments>7</experiments>
</comment>
<comment type="interaction">
    <interactant intactId="EBI-359832">
        <id>P61981</id>
    </interactant>
    <interactant intactId="EBI-25885343">
        <id>Q96J88-3</id>
        <label>EPSTI1</label>
    </interactant>
    <organismsDiffer>false</organismsDiffer>
    <experiments>3</experiments>
</comment>
<comment type="interaction">
    <interactant intactId="EBI-359832">
        <id>P61981</id>
    </interactant>
    <interactant intactId="EBI-1644252">
        <id>Q9NYF3</id>
        <label>FAM53C</label>
    </interactant>
    <organismsDiffer>false</organismsDiffer>
    <experiments>9</experiments>
</comment>
<comment type="interaction">
    <interactant intactId="EBI-359832">
        <id>P61981</id>
    </interactant>
    <interactant intactId="EBI-25885364">
        <id>Q8IVH2-2</id>
        <label>FOXP4</label>
    </interactant>
    <organismsDiffer>false</organismsDiffer>
    <experiments>3</experiments>
</comment>
<comment type="interaction">
    <interactant intactId="EBI-359832">
        <id>P61981</id>
    </interactant>
    <interactant intactId="EBI-13213391">
        <id>Q96NE9-2</id>
        <label>FRMD6</label>
    </interactant>
    <organismsDiffer>false</organismsDiffer>
    <experiments>3</experiments>
</comment>
<comment type="interaction">
    <interactant intactId="EBI-359832">
        <id>P61981</id>
    </interactant>
    <interactant intactId="EBI-21017948">
        <id>O14926</id>
        <label>FSCN2</label>
    </interactant>
    <organismsDiffer>false</organismsDiffer>
    <experiments>3</experiments>
</comment>
<comment type="interaction">
    <interactant intactId="EBI-359832">
        <id>P61981</id>
    </interactant>
    <interactant intactId="EBI-618189">
        <id>Q06547-2</id>
        <label>GABPB1</label>
    </interactant>
    <organismsDiffer>false</organismsDiffer>
    <experiments>3</experiments>
</comment>
<comment type="interaction">
    <interactant intactId="EBI-359832">
        <id>P61981</id>
    </interactant>
    <interactant intactId="EBI-9088619">
        <id>Q06547-3</id>
        <label>GABPB1</label>
    </interactant>
    <organismsDiffer>false</organismsDiffer>
    <experiments>3</experiments>
</comment>
<comment type="interaction">
    <interactant intactId="EBI-359832">
        <id>P61981</id>
    </interactant>
    <interactant intactId="EBI-21558069">
        <id>P19440-3</id>
        <label>GGT1</label>
    </interactant>
    <organismsDiffer>false</organismsDiffer>
    <experiments>3</experiments>
</comment>
<comment type="interaction">
    <interactant intactId="EBI-359832">
        <id>P61981</id>
    </interactant>
    <interactant intactId="EBI-7951023">
        <id>O95837</id>
        <label>GNA14</label>
    </interactant>
    <organismsDiffer>false</organismsDiffer>
    <experiments>3</experiments>
</comment>
<comment type="interaction">
    <interactant intactId="EBI-359832">
        <id>P61981</id>
    </interactant>
    <interactant intactId="EBI-25902214">
        <id>Q96F32</id>
        <label>GNB5</label>
    </interactant>
    <organismsDiffer>false</organismsDiffer>
    <experiments>3</experiments>
</comment>
<comment type="interaction">
    <interactant intactId="EBI-359832">
        <id>P61981</id>
    </interactant>
    <interactant intactId="EBI-25884370">
        <id>O43292-2</id>
        <label>GPAA1</label>
    </interactant>
    <organismsDiffer>false</organismsDiffer>
    <experiments>3</experiments>
</comment>
<comment type="interaction">
    <interactant intactId="EBI-359832">
        <id>P61981</id>
    </interactant>
    <interactant intactId="EBI-11959863">
        <id>Q9NWQ4-1</id>
        <label>GPATCH2L</label>
    </interactant>
    <organismsDiffer>false</organismsDiffer>
    <experiments>3</experiments>
</comment>
<comment type="interaction">
    <interactant intactId="EBI-359832">
        <id>P61981</id>
    </interactant>
    <interactant intactId="EBI-25885139">
        <id>Q9UJ42</id>
        <label>GPR160</label>
    </interactant>
    <organismsDiffer>false</organismsDiffer>
    <experiments>3</experiments>
</comment>
<comment type="interaction">
    <interactant intactId="EBI-359832">
        <id>P61981</id>
    </interactant>
    <interactant intactId="EBI-473189">
        <id>Q96D09</id>
        <label>GPRASP2</label>
    </interactant>
    <organismsDiffer>false</organismsDiffer>
    <experiments>4</experiments>
</comment>
<comment type="interaction">
    <interactant intactId="EBI-359832">
        <id>P61981</id>
    </interactant>
    <interactant intactId="EBI-12353035">
        <id>Q13322-4</id>
        <label>GRB10</label>
    </interactant>
    <organismsDiffer>false</organismsDiffer>
    <experiments>3</experiments>
</comment>
<comment type="interaction">
    <interactant intactId="EBI-359832">
        <id>P61981</id>
    </interactant>
    <interactant intactId="EBI-302023">
        <id>P62805</id>
        <label>H4C9</label>
    </interactant>
    <organismsDiffer>false</organismsDiffer>
    <experiments>3</experiments>
</comment>
<comment type="interaction">
    <interactant intactId="EBI-359832">
        <id>P61981</id>
    </interactant>
    <interactant intactId="EBI-357001">
        <id>O00165</id>
        <label>HAX1</label>
    </interactant>
    <organismsDiffer>false</organismsDiffer>
    <experiments>3</experiments>
</comment>
<comment type="interaction">
    <interactant intactId="EBI-359832">
        <id>P61981</id>
    </interactant>
    <interactant intactId="EBI-25858908">
        <id>Q8N7T0</id>
        <label>hCG_1820408</label>
    </interactant>
    <organismsDiffer>false</organismsDiffer>
    <experiments>3</experiments>
</comment>
<comment type="interaction">
    <interactant intactId="EBI-359832">
        <id>P61981</id>
    </interactant>
    <interactant intactId="EBI-308629">
        <id>P56524</id>
        <label>HDAC4</label>
    </interactant>
    <organismsDiffer>false</organismsDiffer>
    <experiments>13</experiments>
</comment>
<comment type="interaction">
    <interactant intactId="EBI-359832">
        <id>P61981</id>
    </interactant>
    <interactant intactId="EBI-2514157">
        <id>P31629</id>
        <label>HIVEP2</label>
    </interactant>
    <organismsDiffer>false</organismsDiffer>
    <experiments>4</experiments>
</comment>
<comment type="interaction">
    <interactant intactId="EBI-359832">
        <id>P61981</id>
    </interactant>
    <interactant intactId="EBI-28989979">
        <id>Q5T1R4</id>
        <label>HIVEP3</label>
    </interactant>
    <organismsDiffer>false</organismsDiffer>
    <experiments>2</experiments>
</comment>
<comment type="interaction">
    <interactant intactId="EBI-359832">
        <id>P61981</id>
    </interactant>
    <interactant intactId="EBI-352986">
        <id>P52597</id>
        <label>HNRNPF</label>
    </interactant>
    <organismsDiffer>false</organismsDiffer>
    <experiments>3</experiments>
</comment>
<comment type="interaction">
    <interactant intactId="EBI-359832">
        <id>P61981</id>
    </interactant>
    <interactant intactId="EBI-11317274">
        <id>Q92826</id>
        <label>HOXB13</label>
    </interactant>
    <organismsDiffer>false</organismsDiffer>
    <experiments>3</experiments>
</comment>
<comment type="interaction">
    <interactant intactId="EBI-359832">
        <id>P61981</id>
    </interactant>
    <interactant intactId="EBI-3923226">
        <id>P09017</id>
        <label>HOXC4</label>
    </interactant>
    <organismsDiffer>false</organismsDiffer>
    <experiments>3</experiments>
</comment>
<comment type="interaction">
    <interactant intactId="EBI-359832">
        <id>P61981</id>
    </interactant>
    <interactant intactId="EBI-10223348">
        <id>Q03933-2</id>
        <label>HSF2</label>
    </interactant>
    <organismsDiffer>false</organismsDiffer>
    <experiments>3</experiments>
</comment>
<comment type="interaction">
    <interactant intactId="EBI-359832">
        <id>P61981</id>
    </interactant>
    <interactant intactId="EBI-713450">
        <id>Q02363</id>
        <label>ID2</label>
    </interactant>
    <organismsDiffer>false</organismsDiffer>
    <experiments>3</experiments>
</comment>
<comment type="interaction">
    <interactant intactId="EBI-359832">
        <id>P61981</id>
    </interactant>
    <interactant intactId="EBI-11944538">
        <id>Q96FT9-2</id>
        <label>IFT43</label>
    </interactant>
    <organismsDiffer>false</organismsDiffer>
    <experiments>3</experiments>
</comment>
<comment type="interaction">
    <interactant intactId="EBI-359832">
        <id>P61981</id>
    </interactant>
    <interactant intactId="EBI-1055954">
        <id>P78318</id>
        <label>IGBP1</label>
    </interactant>
    <organismsDiffer>false</organismsDiffer>
    <experiments>3</experiments>
</comment>
<comment type="interaction">
    <interactant intactId="EBI-359832">
        <id>P61981</id>
    </interactant>
    <interactant intactId="EBI-715709">
        <id>P17936</id>
        <label>IGFBP3</label>
    </interactant>
    <organismsDiffer>false</organismsDiffer>
    <experiments>3</experiments>
</comment>
<comment type="interaction">
    <interactant intactId="EBI-359832">
        <id>P61981</id>
    </interactant>
    <interactant intactId="EBI-1757512">
        <id>P26951</id>
        <label>IL3RA</label>
    </interactant>
    <organismsDiffer>false</organismsDiffer>
    <experiments>3</experiments>
</comment>
<comment type="interaction">
    <interactant intactId="EBI-359832">
        <id>P61981</id>
    </interactant>
    <interactant intactId="EBI-722905">
        <id>P28290</id>
        <label>ITPRID2</label>
    </interactant>
    <organismsDiffer>false</organismsDiffer>
    <experiments>6</experiments>
</comment>
<comment type="interaction">
    <interactant intactId="EBI-359832">
        <id>P61981</id>
    </interactant>
    <interactant intactId="EBI-6173812">
        <id>Q14678-2</id>
        <label>KANK1</label>
    </interactant>
    <organismsDiffer>false</organismsDiffer>
    <experiments>3</experiments>
</comment>
<comment type="interaction">
    <interactant intactId="EBI-359832">
        <id>P61981</id>
    </interactant>
    <interactant intactId="EBI-743960">
        <id>Q8N5Z5</id>
        <label>KCTD17</label>
    </interactant>
    <organismsDiffer>false</organismsDiffer>
    <experiments>3</experiments>
</comment>
<comment type="interaction">
    <interactant intactId="EBI-359832">
        <id>P61981</id>
    </interactant>
    <interactant intactId="EBI-1644048">
        <id>O43896</id>
        <label>KIF1C</label>
    </interactant>
    <organismsDiffer>false</organismsDiffer>
    <experiments>7</experiments>
</comment>
<comment type="interaction">
    <interactant intactId="EBI-359832">
        <id>P61981</id>
    </interactant>
    <interactant intactId="EBI-306852">
        <id>Q02241</id>
        <label>KIF23</label>
    </interactant>
    <organismsDiffer>false</organismsDiffer>
    <experiments>9</experiments>
</comment>
<comment type="interaction">
    <interactant intactId="EBI-359832">
        <id>P61981</id>
    </interactant>
    <interactant intactId="EBI-1643885">
        <id>Q6P597</id>
        <label>KLC3</label>
    </interactant>
    <organismsDiffer>false</organismsDiffer>
    <experiments>4</experiments>
</comment>
<comment type="interaction">
    <interactant intactId="EBI-359832">
        <id>P61981</id>
    </interactant>
    <interactant intactId="EBI-750750">
        <id>Q9Y4X4</id>
        <label>KLF12</label>
    </interactant>
    <organismsDiffer>false</organismsDiffer>
    <experiments>3</experiments>
</comment>
<comment type="interaction">
    <interactant intactId="EBI-359832">
        <id>P61981</id>
    </interactant>
    <interactant intactId="EBI-12893625">
        <id>Q5JUW0-3</id>
        <label>KRBOX4</label>
    </interactant>
    <organismsDiffer>false</organismsDiffer>
    <experiments>3</experiments>
</comment>
<comment type="interaction">
    <interactant intactId="EBI-359832">
        <id>P61981</id>
    </interactant>
    <interactant intactId="EBI-297888">
        <id>P05783</id>
        <label>KRT18</label>
    </interactant>
    <organismsDiffer>false</organismsDiffer>
    <experiments>3</experiments>
</comment>
<comment type="interaction">
    <interactant intactId="EBI-359832">
        <id>P61981</id>
    </interactant>
    <interactant intactId="EBI-9996449">
        <id>Q9BYR8</id>
        <label>KRTAP3-1</label>
    </interactant>
    <organismsDiffer>false</organismsDiffer>
    <experiments>3</experiments>
</comment>
<comment type="interaction">
    <interactant intactId="EBI-359832">
        <id>P61981</id>
    </interactant>
    <interactant intactId="EBI-25835523">
        <id>Q9H2C1</id>
        <label>LHX5</label>
    </interactant>
    <organismsDiffer>false</organismsDiffer>
    <experiments>3</experiments>
</comment>
<comment type="interaction">
    <interactant intactId="EBI-359832">
        <id>P61981</id>
    </interactant>
    <interactant intactId="EBI-727376">
        <id>Q9Y234</id>
        <label>LIPT1</label>
    </interactant>
    <organismsDiffer>false</organismsDiffer>
    <experiments>3</experiments>
</comment>
<comment type="interaction">
    <interactant intactId="EBI-359832">
        <id>P61981</id>
    </interactant>
    <interactant intactId="EBI-5323863">
        <id>Q5S007</id>
        <label>LRRK2</label>
    </interactant>
    <organismsDiffer>false</organismsDiffer>
    <experiments>26</experiments>
</comment>
<comment type="interaction">
    <interactant intactId="EBI-359832">
        <id>P61981</id>
    </interactant>
    <interactant intactId="EBI-725780">
        <id>P51884</id>
        <label>LUM</label>
    </interactant>
    <organismsDiffer>false</organismsDiffer>
    <experiments>3</experiments>
</comment>
<comment type="interaction">
    <interactant intactId="EBI-359832">
        <id>P61981</id>
    </interactant>
    <interactant intactId="EBI-2350695">
        <id>Q96GV9</id>
        <label>MACIR</label>
    </interactant>
    <organismsDiffer>false</organismsDiffer>
    <experiments>7</experiments>
</comment>
<comment type="interaction">
    <interactant intactId="EBI-359832">
        <id>P61981</id>
    </interactant>
    <interactant intactId="EBI-473834">
        <id>Q9H213</id>
        <label>MAGEH1</label>
    </interactant>
    <organismsDiffer>false</organismsDiffer>
    <experiments>3</experiments>
</comment>
<comment type="interaction">
    <interactant intactId="EBI-359832">
        <id>P61981</id>
    </interactant>
    <interactant intactId="EBI-307281">
        <id>Q99759</id>
        <label>MAP3K3</label>
    </interactant>
    <organismsDiffer>false</organismsDiffer>
    <experiments>6</experiments>
</comment>
<comment type="interaction">
    <interactant intactId="EBI-359832">
        <id>P61981</id>
    </interactant>
    <interactant intactId="EBI-476263">
        <id>Q99683</id>
        <label>MAP3K5</label>
    </interactant>
    <organismsDiffer>false</organismsDiffer>
    <experiments>4</experiments>
</comment>
<comment type="interaction">
    <interactant intactId="EBI-359832">
        <id>P61981</id>
    </interactant>
    <interactant intactId="EBI-1254761">
        <id>O95382</id>
        <label>MAP3K6</label>
    </interactant>
    <organismsDiffer>false</organismsDiffer>
    <experiments>3</experiments>
</comment>
<comment type="interaction">
    <interactant intactId="EBI-359832">
        <id>P61981</id>
    </interactant>
    <interactant intactId="EBI-3951604">
        <id>P80192</id>
        <label>MAP3K9</label>
    </interactant>
    <organismsDiffer>false</organismsDiffer>
    <experiments>4</experiments>
</comment>
<comment type="interaction">
    <interactant intactId="EBI-359832">
        <id>P61981</id>
    </interactant>
    <interactant intactId="EBI-298304">
        <id>Q15759</id>
        <label>MAPK11</label>
    </interactant>
    <organismsDiffer>false</organismsDiffer>
    <experiments>3</experiments>
</comment>
<comment type="interaction">
    <interactant intactId="EBI-359832">
        <id>P61981</id>
    </interactant>
    <interactant intactId="EBI-516560">
        <id>Q7KZI7</id>
        <label>MARK2</label>
    </interactant>
    <organismsDiffer>false</organismsDiffer>
    <experiments>10</experiments>
</comment>
<comment type="interaction">
    <interactant intactId="EBI-359832">
        <id>P61981</id>
    </interactant>
    <interactant intactId="EBI-707595">
        <id>P27448</id>
        <label>MARK3</label>
    </interactant>
    <organismsDiffer>false</organismsDiffer>
    <experiments>11</experiments>
</comment>
<comment type="interaction">
    <interactant intactId="EBI-359832">
        <id>P61981</id>
    </interactant>
    <interactant intactId="EBI-398437">
        <id>O15151</id>
        <label>MDM4</label>
    </interactant>
    <organismsDiffer>false</organismsDiffer>
    <experiments>8</experiments>
</comment>
<comment type="interaction">
    <interactant intactId="EBI-359832">
        <id>P61981</id>
    </interactant>
    <interactant intactId="EBI-13288755">
        <id>A0JLT2-2</id>
        <label>MED19</label>
    </interactant>
    <organismsDiffer>false</organismsDiffer>
    <experiments>3</experiments>
</comment>
<comment type="interaction">
    <interactant intactId="EBI-359832">
        <id>P61981</id>
    </interactant>
    <interactant intactId="EBI-2829677">
        <id>P41218</id>
        <label>MNDA</label>
    </interactant>
    <organismsDiffer>false</organismsDiffer>
    <experiments>3</experiments>
</comment>
<comment type="interaction">
    <interactant intactId="EBI-359832">
        <id>P61981</id>
    </interactant>
    <interactant intactId="EBI-2511359">
        <id>Q99550</id>
        <label>MPHOSPH9</label>
    </interactant>
    <organismsDiffer>false</organismsDiffer>
    <experiments>4</experiments>
</comment>
<comment type="interaction">
    <interactant intactId="EBI-359832">
        <id>P61981</id>
    </interactant>
    <interactant intactId="EBI-11109389">
        <id>Q8N983-3</id>
        <label>MRPL43</label>
    </interactant>
    <organismsDiffer>false</organismsDiffer>
    <experiments>3</experiments>
</comment>
<comment type="interaction">
    <interactant intactId="EBI-359832">
        <id>P61981</id>
    </interactant>
    <interactant intactId="EBI-746417">
        <id>Q16718</id>
        <label>NDUFA5</label>
    </interactant>
    <organismsDiffer>false</organismsDiffer>
    <experiments>3</experiments>
</comment>
<comment type="interaction">
    <interactant intactId="EBI-359832">
        <id>P61981</id>
    </interactant>
    <interactant intactId="EBI-748312">
        <id>P49821</id>
        <label>NDUFV1</label>
    </interactant>
    <organismsDiffer>false</organismsDiffer>
    <experiments>3</experiments>
</comment>
<comment type="interaction">
    <interactant intactId="EBI-359832">
        <id>P61981</id>
    </interactant>
    <interactant intactId="EBI-717962">
        <id>Q96PU5</id>
        <label>NEDD4L</label>
    </interactant>
    <organismsDiffer>false</organismsDiffer>
    <experiments>5</experiments>
</comment>
<comment type="interaction">
    <interactant intactId="EBI-359832">
        <id>P61981</id>
    </interactant>
    <interactant intactId="EBI-10178578">
        <id>I6L9F6</id>
        <label>NEFL</label>
    </interactant>
    <organismsDiffer>false</organismsDiffer>
    <experiments>3</experiments>
</comment>
<comment type="interaction">
    <interactant intactId="EBI-359832">
        <id>P61981</id>
    </interactant>
    <interactant intactId="EBI-2859639">
        <id>Q5HYW2</id>
        <label>NHSL2</label>
    </interactant>
    <organismsDiffer>false</organismsDiffer>
    <experiments>3</experiments>
</comment>
<comment type="interaction">
    <interactant intactId="EBI-359832">
        <id>P61981</id>
    </interactant>
    <interactant intactId="EBI-9978021">
        <id>Q2M1J6</id>
        <label>OXA1L</label>
    </interactant>
    <organismsDiffer>false</organismsDiffer>
    <experiments>3</experiments>
</comment>
<comment type="interaction">
    <interactant intactId="EBI-359832">
        <id>P61981</id>
    </interactant>
    <interactant intactId="EBI-359462">
        <id>Q16342</id>
        <label>PDCD2</label>
    </interactant>
    <organismsDiffer>false</organismsDiffer>
    <experiments>3</experiments>
</comment>
<comment type="interaction">
    <interactant intactId="EBI-359832">
        <id>P61981</id>
    </interactant>
    <interactant intactId="EBI-1043580">
        <id>Q9BRX2</id>
        <label>PELO</label>
    </interactant>
    <organismsDiffer>false</organismsDiffer>
    <experiments>3</experiments>
</comment>
<comment type="interaction">
    <interactant intactId="EBI-359832">
        <id>P61981</id>
    </interactant>
    <interactant intactId="EBI-2803703">
        <id>Q9Y6X2</id>
        <label>PIAS3</label>
    </interactant>
    <organismsDiffer>false</organismsDiffer>
    <experiments>3</experiments>
</comment>
<comment type="interaction">
    <interactant intactId="EBI-359832">
        <id>P61981</id>
    </interactant>
    <interactant intactId="EBI-6164623">
        <id>Q86T03</id>
        <label>PIP4P1</label>
    </interactant>
    <organismsDiffer>false</organismsDiffer>
    <experiments>3</experiments>
</comment>
<comment type="interaction">
    <interactant intactId="EBI-359832">
        <id>P61981</id>
    </interactant>
    <interactant intactId="EBI-10694821">
        <id>Q6P1J6-2</id>
        <label>PLB1</label>
    </interactant>
    <organismsDiffer>false</organismsDiffer>
    <experiments>3</experiments>
</comment>
<comment type="interaction">
    <interactant intactId="EBI-359832">
        <id>P61981</id>
    </interactant>
    <interactant intactId="EBI-741774">
        <id>Q9UNA4</id>
        <label>POLI</label>
    </interactant>
    <organismsDiffer>false</organismsDiffer>
    <experiments>3</experiments>
</comment>
<comment type="interaction">
    <interactant intactId="EBI-359832">
        <id>P61981</id>
    </interactant>
    <interactant intactId="EBI-2803380">
        <id>P07225</id>
        <label>PROS1</label>
    </interactant>
    <organismsDiffer>false</organismsDiffer>
    <experiments>3</experiments>
</comment>
<comment type="interaction">
    <interactant intactId="EBI-359832">
        <id>P61981</id>
    </interactant>
    <interactant intactId="EBI-1047946">
        <id>P26045</id>
        <label>PTPN3</label>
    </interactant>
    <organismsDiffer>false</organismsDiffer>
    <experiments>7</experiments>
</comment>
<comment type="interaction">
    <interactant intactId="EBI-359832">
        <id>P61981</id>
    </interactant>
    <interactant intactId="EBI-25885259">
        <id>Q3YEC7-3</id>
        <label>RABL6</label>
    </interactant>
    <organismsDiffer>false</organismsDiffer>
    <experiments>3</experiments>
</comment>
<comment type="interaction">
    <interactant intactId="EBI-359832">
        <id>P61981</id>
    </interactant>
    <interactant intactId="EBI-365996">
        <id>P04049</id>
        <label>RAF1</label>
    </interactant>
    <organismsDiffer>false</organismsDiffer>
    <experiments>24</experiments>
</comment>
<comment type="interaction">
    <interactant intactId="EBI-359832">
        <id>P61981</id>
    </interactant>
    <interactant intactId="EBI-2117080">
        <id>Q96I51</id>
        <label>RCC1L</label>
    </interactant>
    <organismsDiffer>false</organismsDiffer>
    <experiments>3</experiments>
</comment>
<comment type="interaction">
    <interactant intactId="EBI-359832">
        <id>P61981</id>
    </interactant>
    <interactant intactId="EBI-6426999">
        <id>O94844</id>
        <label>RHOBTB1</label>
    </interactant>
    <organismsDiffer>false</organismsDiffer>
    <experiments>3</experiments>
</comment>
<comment type="interaction">
    <interactant intactId="EBI-359832">
        <id>P61981</id>
    </interactant>
    <interactant intactId="EBI-3909436">
        <id>Q9UJD0</id>
        <label>RIMS3</label>
    </interactant>
    <organismsDiffer>false</organismsDiffer>
    <experiments>5</experiments>
</comment>
<comment type="interaction">
    <interactant intactId="EBI-359832">
        <id>P61981</id>
    </interactant>
    <interactant intactId="EBI-25884400">
        <id>Q9NWS8-3</id>
        <label>RMND1</label>
    </interactant>
    <organismsDiffer>false</organismsDiffer>
    <experiments>3</experiments>
</comment>
<comment type="interaction">
    <interactant intactId="EBI-359832">
        <id>P61981</id>
    </interactant>
    <interactant intactId="EBI-723587">
        <id>Q9Y508</id>
        <label>RNF114</label>
    </interactant>
    <organismsDiffer>false</organismsDiffer>
    <experiments>3</experiments>
</comment>
<comment type="interaction">
    <interactant intactId="EBI-359832">
        <id>P61981</id>
    </interactant>
    <interactant intactId="EBI-36513929">
        <id>Q9ULK6-3</id>
        <label>RNF150</label>
    </interactant>
    <organismsDiffer>false</organismsDiffer>
    <experiments>3</experiments>
</comment>
<comment type="interaction">
    <interactant intactId="EBI-359832">
        <id>P61981</id>
    </interactant>
    <interactant intactId="EBI-11027771">
        <id>P62913-2</id>
        <label>RPL11</label>
    </interactant>
    <organismsDiffer>false</organismsDiffer>
    <experiments>3</experiments>
</comment>
<comment type="interaction">
    <interactant intactId="EBI-359832">
        <id>P61981</id>
    </interactant>
    <interactant intactId="EBI-353383">
        <id>P18077</id>
        <label>RPL35A</label>
    </interactant>
    <organismsDiffer>false</organismsDiffer>
    <experiments>3</experiments>
</comment>
<comment type="interaction">
    <interactant intactId="EBI-359832">
        <id>P61981</id>
    </interactant>
    <interactant intactId="EBI-1047497">
        <id>Q9UPU9</id>
        <label>SAMD4A</label>
    </interactant>
    <organismsDiffer>false</organismsDiffer>
    <experiments>5</experiments>
</comment>
<comment type="interaction">
    <interactant intactId="EBI-359832">
        <id>P61981</id>
    </interactant>
    <interactant intactId="EBI-1224539">
        <id>Q99643</id>
        <label>SDHC</label>
    </interactant>
    <organismsDiffer>false</organismsDiffer>
    <experiments>3</experiments>
</comment>
<comment type="interaction">
    <interactant intactId="EBI-359832">
        <id>P61981</id>
    </interactant>
    <interactant intactId="EBI-745901">
        <id>Q14141</id>
        <label>SEPTIN6</label>
    </interactant>
    <organismsDiffer>false</organismsDiffer>
    <experiments>3</experiments>
</comment>
<comment type="interaction">
    <interactant intactId="EBI-359832">
        <id>P61981</id>
    </interactant>
    <interactant intactId="EBI-7481343">
        <id>Q01105-2</id>
        <label>SET</label>
    </interactant>
    <organismsDiffer>false</organismsDiffer>
    <experiments>3</experiments>
</comment>
<comment type="interaction">
    <interactant intactId="EBI-359832">
        <id>P61981</id>
    </interactant>
    <interactant intactId="EBI-476295">
        <id>P31947</id>
        <label>SFN</label>
    </interactant>
    <organismsDiffer>false</organismsDiffer>
    <experiments>4</experiments>
</comment>
<comment type="interaction">
    <interactant intactId="EBI-359832">
        <id>P61981</id>
    </interactant>
    <interactant intactId="EBI-1049513">
        <id>Q9P0V3</id>
        <label>SH3BP4</label>
    </interactant>
    <organismsDiffer>false</organismsDiffer>
    <experiments>7</experiments>
</comment>
<comment type="interaction">
    <interactant intactId="EBI-359832">
        <id>P61981</id>
    </interactant>
    <interactant intactId="EBI-632715">
        <id>Q13573</id>
        <label>SNW1</label>
    </interactant>
    <organismsDiffer>false</organismsDiffer>
    <experiments>4</experiments>
</comment>
<comment type="interaction">
    <interactant intactId="EBI-359832">
        <id>P61981</id>
    </interactant>
    <interactant intactId="EBI-10329478">
        <id>Q9Y5X0</id>
        <label>SNX10</label>
    </interactant>
    <organismsDiffer>false</organismsDiffer>
    <experiments>3</experiments>
</comment>
<comment type="interaction">
    <interactant intactId="EBI-359832">
        <id>P61981</id>
    </interactant>
    <interactant intactId="EBI-2481535">
        <id>Q8WV41</id>
        <label>SNX33</label>
    </interactant>
    <organismsDiffer>false</organismsDiffer>
    <experiments>6</experiments>
</comment>
<comment type="interaction">
    <interactant intactId="EBI-359832">
        <id>P61981</id>
    </interactant>
    <interactant intactId="EBI-1167533">
        <id>P56693</id>
        <label>SOX10</label>
    </interactant>
    <organismsDiffer>false</organismsDiffer>
    <experiments>3</experiments>
</comment>
<comment type="interaction">
    <interactant intactId="EBI-359832">
        <id>P61981</id>
    </interactant>
    <interactant intactId="EBI-25868254">
        <id>Q9BRW5</id>
        <label>SP2</label>
    </interactant>
    <organismsDiffer>false</organismsDiffer>
    <experiments>3</experiments>
</comment>
<comment type="interaction">
    <interactant intactId="EBI-359832">
        <id>P61981</id>
    </interactant>
    <interactant intactId="EBI-2822128">
        <id>Q96JI7</id>
        <label>SPG11</label>
    </interactant>
    <organismsDiffer>false</organismsDiffer>
    <experiments>2</experiments>
</comment>
<comment type="interaction">
    <interactant intactId="EBI-359832">
        <id>P61981</id>
    </interactant>
    <interactant intactId="EBI-353655">
        <id>O75494</id>
        <label>SRSF10</label>
    </interactant>
    <organismsDiffer>false</organismsDiffer>
    <experiments>5</experiments>
</comment>
<comment type="interaction">
    <interactant intactId="EBI-359832">
        <id>P61981</id>
    </interactant>
    <interactant intactId="EBI-448878">
        <id>Q13586</id>
        <label>STIM1</label>
    </interactant>
    <organismsDiffer>false</organismsDiffer>
    <experiments>5</experiments>
</comment>
<comment type="interaction">
    <interactant intactId="EBI-359832">
        <id>P61981</id>
    </interactant>
    <interactant intactId="EBI-1053876">
        <id>Q13033-2</id>
        <label>STRN3</label>
    </interactant>
    <organismsDiffer>false</organismsDiffer>
    <experiments>3</experiments>
</comment>
<comment type="interaction">
    <interactant intactId="EBI-359832">
        <id>P61981</id>
    </interactant>
    <interactant intactId="EBI-11321949">
        <id>O43761</id>
        <label>SYNGR3</label>
    </interactant>
    <organismsDiffer>false</organismsDiffer>
    <experiments>3</experiments>
</comment>
<comment type="interaction">
    <interactant intactId="EBI-359832">
        <id>P61981</id>
    </interactant>
    <interactant intactId="EBI-533224">
        <id>P15884</id>
        <label>TCF4</label>
    </interactant>
    <organismsDiffer>false</organismsDiffer>
    <experiments>3</experiments>
</comment>
<comment type="interaction">
    <interactant intactId="EBI-359832">
        <id>P61981</id>
    </interactant>
    <interactant intactId="EBI-725275">
        <id>Q92481</id>
        <label>TFAP2B</label>
    </interactant>
    <organismsDiffer>false</organismsDiffer>
    <experiments>3</experiments>
</comment>
<comment type="interaction">
    <interactant intactId="EBI-359832">
        <id>P61981</id>
    </interactant>
    <interactant intactId="EBI-717399">
        <id>Q9BSI4</id>
        <label>TINF2</label>
    </interactant>
    <organismsDiffer>false</organismsDiffer>
    <experiments>2</experiments>
</comment>
<comment type="interaction">
    <interactant intactId="EBI-359832">
        <id>P61981</id>
    </interactant>
    <interactant intactId="EBI-2821479">
        <id>Q3YBM2</id>
        <label>TMEM176B</label>
    </interactant>
    <organismsDiffer>false</organismsDiffer>
    <experiments>3</experiments>
</comment>
<comment type="interaction">
    <interactant intactId="EBI-359832">
        <id>P61981</id>
    </interactant>
    <interactant intactId="EBI-3922833">
        <id>Q969K7</id>
        <label>TMEM54</label>
    </interactant>
    <organismsDiffer>false</organismsDiffer>
    <experiments>3</experiments>
</comment>
<comment type="interaction">
    <interactant intactId="EBI-359832">
        <id>P61981</id>
    </interactant>
    <interactant intactId="EBI-1390168">
        <id>Q9H8H3</id>
        <label>TMT1A</label>
    </interactant>
    <organismsDiffer>false</organismsDiffer>
    <experiments>3</experiments>
</comment>
<comment type="interaction">
    <interactant intactId="EBI-359832">
        <id>P61981</id>
    </interactant>
    <interactant intactId="EBI-527670">
        <id>P21580</id>
        <label>TNFAIP3</label>
    </interactant>
    <organismsDiffer>false</organismsDiffer>
    <experiments>4</experiments>
</comment>
<comment type="interaction">
    <interactant intactId="EBI-359832">
        <id>P61981</id>
    </interactant>
    <interactant intactId="EBI-366083">
        <id>P04637</id>
        <label>TP53</label>
    </interactant>
    <organismsDiffer>false</organismsDiffer>
    <experiments>5</experiments>
</comment>
<comment type="interaction">
    <interactant intactId="EBI-359832">
        <id>P61981</id>
    </interactant>
    <interactant intactId="EBI-25902017">
        <id>P51580</id>
        <label>TPMT</label>
    </interactant>
    <organismsDiffer>false</organismsDiffer>
    <experiments>3</experiments>
</comment>
<comment type="interaction">
    <interactant intactId="EBI-359832">
        <id>P61981</id>
    </interactant>
    <interactant intactId="EBI-934061">
        <id>Q9UJA5</id>
        <label>TRMT6</label>
    </interactant>
    <organismsDiffer>false</organismsDiffer>
    <experiments>3</experiments>
</comment>
<comment type="interaction">
    <interactant intactId="EBI-359832">
        <id>P61981</id>
    </interactant>
    <interactant intactId="EBI-21353855">
        <id>Q99598</id>
        <label>TSNAX</label>
    </interactant>
    <organismsDiffer>false</organismsDiffer>
    <experiments>3</experiments>
</comment>
<comment type="interaction">
    <interactant intactId="EBI-359832">
        <id>P61981</id>
    </interactant>
    <interactant intactId="EBI-2512509">
        <id>Q8NB14</id>
        <label>USP38</label>
    </interactant>
    <organismsDiffer>false</organismsDiffer>
    <experiments>3</experiments>
</comment>
<comment type="interaction">
    <interactant intactId="EBI-359832">
        <id>P61981</id>
    </interactant>
    <interactant intactId="EBI-722343">
        <id>Q15836</id>
        <label>VAMP3</label>
    </interactant>
    <organismsDiffer>false</organismsDiffer>
    <experiments>3</experiments>
</comment>
<comment type="interaction">
    <interactant intactId="EBI-359832">
        <id>P61981</id>
    </interactant>
    <interactant intactId="EBI-21494555">
        <id>O95498</id>
        <label>VNN2</label>
    </interactant>
    <organismsDiffer>false</organismsDiffer>
    <experiments>3</experiments>
</comment>
<comment type="interaction">
    <interactant intactId="EBI-359832">
        <id>P61981</id>
    </interactant>
    <interactant intactId="EBI-457907">
        <id>Q9H4A3</id>
        <label>WNK1</label>
    </interactant>
    <organismsDiffer>false</organismsDiffer>
    <experiments>7</experiments>
</comment>
<comment type="interaction">
    <interactant intactId="EBI-359832">
        <id>P61981</id>
    </interactant>
    <interactant intactId="EBI-12040603">
        <id>Q9NZC7-5</id>
        <label>WWOX</label>
    </interactant>
    <organismsDiffer>false</organismsDiffer>
    <experiments>3</experiments>
</comment>
<comment type="interaction">
    <interactant intactId="EBI-359832">
        <id>P61981</id>
    </interactant>
    <interactant intactId="EBI-747743">
        <id>Q9GZV5</id>
        <label>WWTR1</label>
    </interactant>
    <organismsDiffer>false</organismsDiffer>
    <experiments>5</experiments>
</comment>
<comment type="interaction">
    <interactant intactId="EBI-359832">
        <id>P61981</id>
    </interactant>
    <interactant intactId="EBI-359815">
        <id>P31946</id>
        <label>YWHAB</label>
    </interactant>
    <organismsDiffer>false</organismsDiffer>
    <experiments>9</experiments>
</comment>
<comment type="interaction">
    <interactant intactId="EBI-359832">
        <id>P61981</id>
    </interactant>
    <interactant intactId="EBI-356498">
        <id>P62258</id>
        <label>YWHAE</label>
    </interactant>
    <organismsDiffer>false</organismsDiffer>
    <experiments>17</experiments>
</comment>
<comment type="interaction">
    <interactant intactId="EBI-359832">
        <id>P61981</id>
    </interactant>
    <interactant intactId="EBI-359832">
        <id>P61981</id>
        <label>YWHAG</label>
    </interactant>
    <organismsDiffer>false</organismsDiffer>
    <experiments>4</experiments>
</comment>
<comment type="interaction">
    <interactant intactId="EBI-359832">
        <id>P61981</id>
    </interactant>
    <interactant intactId="EBI-359854">
        <id>P27348</id>
        <label>YWHAQ</label>
    </interactant>
    <organismsDiffer>false</organismsDiffer>
    <experiments>11</experiments>
</comment>
<comment type="interaction">
    <interactant intactId="EBI-359832">
        <id>P61981</id>
    </interactant>
    <interactant intactId="EBI-14104088">
        <id>Q53FD0-2</id>
        <label>ZC2HC1C</label>
    </interactant>
    <organismsDiffer>false</organismsDiffer>
    <experiments>3</experiments>
</comment>
<comment type="interaction">
    <interactant intactId="EBI-359832">
        <id>P61981</id>
    </interactant>
    <interactant intactId="EBI-721823">
        <id>Q07352</id>
        <label>ZFP36L1</label>
    </interactant>
    <organismsDiffer>false</organismsDiffer>
    <experiments>4</experiments>
</comment>
<comment type="interaction">
    <interactant intactId="EBI-359832">
        <id>P61981</id>
    </interactant>
    <interactant intactId="EBI-2849569">
        <id>Q9BQ24</id>
        <label>ZFYVE21</label>
    </interactant>
    <organismsDiffer>false</organismsDiffer>
    <experiments>3</experiments>
</comment>
<comment type="interaction">
    <interactant intactId="EBI-359832">
        <id>P61981</id>
    </interactant>
    <interactant intactId="EBI-2602314">
        <id>Q15776</id>
        <label>ZKSCAN8</label>
    </interactant>
    <organismsDiffer>false</organismsDiffer>
    <experiments>3</experiments>
</comment>
<comment type="interaction">
    <interactant intactId="EBI-359832">
        <id>P61981</id>
    </interactant>
    <interactant intactId="EBI-2556139">
        <id>Q14202</id>
        <label>ZMYM3</label>
    </interactant>
    <organismsDiffer>false</organismsDiffer>
    <experiments>3</experiments>
</comment>
<comment type="interaction">
    <interactant intactId="EBI-359832">
        <id>P61981</id>
    </interactant>
    <interactant intactId="EBI-25835471">
        <id>Q05CR2</id>
        <label>ZNF248</label>
    </interactant>
    <organismsDiffer>false</organismsDiffer>
    <experiments>3</experiments>
</comment>
<comment type="interaction">
    <interactant intactId="EBI-359832">
        <id>P61981</id>
    </interactant>
    <interactant intactId="EBI-2462313">
        <id>Q9UL40</id>
        <label>ZNF346</label>
    </interactant>
    <organismsDiffer>false</organismsDiffer>
    <experiments>3</experiments>
</comment>
<comment type="interaction">
    <interactant intactId="EBI-359832">
        <id>P61981</id>
    </interactant>
    <interactant intactId="EBI-12010736">
        <id>Q8N0Y2-2</id>
        <label>ZNF444</label>
    </interactant>
    <organismsDiffer>false</organismsDiffer>
    <experiments>3</experiments>
</comment>
<comment type="interaction">
    <interactant intactId="EBI-359832">
        <id>P61981</id>
    </interactant>
    <interactant intactId="EBI-751531">
        <id>O15535</id>
        <label>ZSCAN9</label>
    </interactant>
    <organismsDiffer>false</organismsDiffer>
    <experiments>3</experiments>
</comment>
<comment type="interaction">
    <interactant intactId="EBI-359832">
        <id>P61981</id>
    </interactant>
    <interactant intactId="EBI-25901704">
        <id>Q9HBH6</id>
    </interactant>
    <organismsDiffer>false</organismsDiffer>
    <experiments>3</experiments>
</comment>
<comment type="interaction">
    <interactant intactId="EBI-359832">
        <id>P61981</id>
    </interactant>
    <interactant intactId="EBI-7540603">
        <id>P67828</id>
        <label>CSNK1A1</label>
    </interactant>
    <organismsDiffer>true</organismsDiffer>
    <experiments>3</experiments>
</comment>
<comment type="interaction">
    <interactant intactId="EBI-359832">
        <id>P61981</id>
    </interactant>
    <interactant intactId="EBI-10148373">
        <id>P61014</id>
        <label>Pln</label>
    </interactant>
    <organismsDiffer>true</organismsDiffer>
    <experiments>3</experiments>
</comment>
<comment type="interaction">
    <interactant intactId="EBI-359832">
        <id>P61981</id>
    </interactant>
    <interactant intactId="EBI-6930266">
        <id>P61588</id>
        <label>Rnd3</label>
    </interactant>
    <organismsDiffer>true</organismsDiffer>
    <experiments>2</experiments>
</comment>
<comment type="subcellular location">
    <subcellularLocation>
        <location evidence="17">Cytoplasm</location>
        <location evidence="17">Cytosol</location>
    </subcellularLocation>
    <subcellularLocation>
        <location evidence="17">Mitochondrion matrix</location>
    </subcellularLocation>
    <text evidence="17">Translocates to the mitochondrial matrix following induction of MALM (mitochondrial protein catabolic process).</text>
</comment>
<comment type="tissue specificity">
    <text evidence="4">Highly expressed in brain, skeletal muscle, and heart.</text>
</comment>
<comment type="PTM">
    <text evidence="3 28">Phosphorylated by various PKC isozymes.</text>
</comment>
<comment type="disease" evidence="22">
    <disease id="DI-05090">
        <name>Developmental and epileptic encephalopathy 56</name>
        <acronym>DEE56</acronym>
        <description>A form of epileptic encephalopathy, a heterogeneous group of severe early-onset epilepsies characterized by refractory seizures, neurodevelopmental impairment, and poor prognosis. Development is normal prior to seizure onset, after which cognitive and motor delays become apparent. DEE56 is an autosomal dominant condition.</description>
        <dbReference type="MIM" id="617665"/>
    </disease>
    <text>The disease is caused by variants affecting the gene represented in this entry.</text>
</comment>
<comment type="similarity">
    <text evidence="30">Belongs to the 14-3-3 family.</text>
</comment>
<sequence length="247" mass="28303">MVDREQLVQKARLAEQAERYDDMAAAMKNVTELNEPLSNEERNLLSVAYKNVVGARRSSWRVISSIEQKTSADGNEKKIEMVRAYREKIEKELEAVCQDVLSLLDNYLIKNCSETQYESKVFYLKMKGDYYRYLAEVATGEKRATVVESSEKAYSEAHEISKEHMQPTHPIRLGLALNYSVFYYEIQNAPEQACHLAKTAFDDAIAELDTLNEDSYKDSTLIMQLLRDNLTLWTSDQQDDDGGEGNN</sequence>
<gene>
    <name evidence="31" type="primary">YWHAG</name>
</gene>
<reference key="1">
    <citation type="journal article" date="1999" name="DNA Cell Biol.">
        <title>14-3-3gamma interacts with and is phosphorylated by multiple protein kinase C isoforms in PDGF-stimulated human vascular smooth muscle cells.</title>
        <authorList>
            <person name="Autieri M.V."/>
            <person name="Carbone C.J."/>
        </authorList>
    </citation>
    <scope>NUCLEOTIDE SEQUENCE [MRNA]</scope>
    <scope>PHOSPHORYLATION</scope>
    <scope>INTERACTION WITH RAF1</scope>
    <source>
        <tissue>Vascular smooth muscle</tissue>
    </source>
</reference>
<reference key="2">
    <citation type="journal article" date="1999" name="Genomics">
        <title>Cloning, expression, and chromosomal mapping of the human 14-3-3gamma gene (YWHAG) to 7q11.23.</title>
        <authorList>
            <person name="Horie M."/>
            <person name="Suzuki M."/>
            <person name="Takahashi E."/>
            <person name="Tanigami A."/>
        </authorList>
    </citation>
    <scope>NUCLEOTIDE SEQUENCE [MRNA]</scope>
    <scope>TISSUE SPECIFICITY</scope>
    <source>
        <tissue>Fetal brain</tissue>
    </source>
</reference>
<reference key="3">
    <citation type="submission" date="2004-06" db="EMBL/GenBank/DDBJ databases">
        <title>Cloning of human full open reading frames in Gateway(TM) system entry vector (pDONR201).</title>
        <authorList>
            <person name="Ebert L."/>
            <person name="Schick M."/>
            <person name="Neubert P."/>
            <person name="Schatten R."/>
            <person name="Henze S."/>
            <person name="Korn B."/>
        </authorList>
    </citation>
    <scope>NUCLEOTIDE SEQUENCE [LARGE SCALE MRNA]</scope>
</reference>
<reference key="4">
    <citation type="journal article" date="2003" name="Nature">
        <title>The DNA sequence of human chromosome 7.</title>
        <authorList>
            <person name="Hillier L.W."/>
            <person name="Fulton R.S."/>
            <person name="Fulton L.A."/>
            <person name="Graves T.A."/>
            <person name="Pepin K.H."/>
            <person name="Wagner-McPherson C."/>
            <person name="Layman D."/>
            <person name="Maas J."/>
            <person name="Jaeger S."/>
            <person name="Walker R."/>
            <person name="Wylie K."/>
            <person name="Sekhon M."/>
            <person name="Becker M.C."/>
            <person name="O'Laughlin M.D."/>
            <person name="Schaller M.E."/>
            <person name="Fewell G.A."/>
            <person name="Delehaunty K.D."/>
            <person name="Miner T.L."/>
            <person name="Nash W.E."/>
            <person name="Cordes M."/>
            <person name="Du H."/>
            <person name="Sun H."/>
            <person name="Edwards J."/>
            <person name="Bradshaw-Cordum H."/>
            <person name="Ali J."/>
            <person name="Andrews S."/>
            <person name="Isak A."/>
            <person name="Vanbrunt A."/>
            <person name="Nguyen C."/>
            <person name="Du F."/>
            <person name="Lamar B."/>
            <person name="Courtney L."/>
            <person name="Kalicki J."/>
            <person name="Ozersky P."/>
            <person name="Bielicki L."/>
            <person name="Scott K."/>
            <person name="Holmes A."/>
            <person name="Harkins R."/>
            <person name="Harris A."/>
            <person name="Strong C.M."/>
            <person name="Hou S."/>
            <person name="Tomlinson C."/>
            <person name="Dauphin-Kohlberg S."/>
            <person name="Kozlowicz-Reilly A."/>
            <person name="Leonard S."/>
            <person name="Rohlfing T."/>
            <person name="Rock S.M."/>
            <person name="Tin-Wollam A.-M."/>
            <person name="Abbott A."/>
            <person name="Minx P."/>
            <person name="Maupin R."/>
            <person name="Strowmatt C."/>
            <person name="Latreille P."/>
            <person name="Miller N."/>
            <person name="Johnson D."/>
            <person name="Murray J."/>
            <person name="Woessner J.P."/>
            <person name="Wendl M.C."/>
            <person name="Yang S.-P."/>
            <person name="Schultz B.R."/>
            <person name="Wallis J.W."/>
            <person name="Spieth J."/>
            <person name="Bieri T.A."/>
            <person name="Nelson J.O."/>
            <person name="Berkowicz N."/>
            <person name="Wohldmann P.E."/>
            <person name="Cook L.L."/>
            <person name="Hickenbotham M.T."/>
            <person name="Eldred J."/>
            <person name="Williams D."/>
            <person name="Bedell J.A."/>
            <person name="Mardis E.R."/>
            <person name="Clifton S.W."/>
            <person name="Chissoe S.L."/>
            <person name="Marra M.A."/>
            <person name="Raymond C."/>
            <person name="Haugen E."/>
            <person name="Gillett W."/>
            <person name="Zhou Y."/>
            <person name="James R."/>
            <person name="Phelps K."/>
            <person name="Iadanoto S."/>
            <person name="Bubb K."/>
            <person name="Simms E."/>
            <person name="Levy R."/>
            <person name="Clendenning J."/>
            <person name="Kaul R."/>
            <person name="Kent W.J."/>
            <person name="Furey T.S."/>
            <person name="Baertsch R.A."/>
            <person name="Brent M.R."/>
            <person name="Keibler E."/>
            <person name="Flicek P."/>
            <person name="Bork P."/>
            <person name="Suyama M."/>
            <person name="Bailey J.A."/>
            <person name="Portnoy M.E."/>
            <person name="Torrents D."/>
            <person name="Chinwalla A.T."/>
            <person name="Gish W.R."/>
            <person name="Eddy S.R."/>
            <person name="McPherson J.D."/>
            <person name="Olson M.V."/>
            <person name="Eichler E.E."/>
            <person name="Green E.D."/>
            <person name="Waterston R.H."/>
            <person name="Wilson R.K."/>
        </authorList>
    </citation>
    <scope>NUCLEOTIDE SEQUENCE [LARGE SCALE GENOMIC DNA]</scope>
</reference>
<reference key="5">
    <citation type="journal article" date="2004" name="Genome Res.">
        <title>The status, quality, and expansion of the NIH full-length cDNA project: the Mammalian Gene Collection (MGC).</title>
        <authorList>
            <consortium name="The MGC Project Team"/>
        </authorList>
    </citation>
    <scope>NUCLEOTIDE SEQUENCE [LARGE SCALE MRNA]</scope>
    <source>
        <tissue>Endometrial tumor</tissue>
    </source>
</reference>
<reference key="6">
    <citation type="journal article" date="2013" name="MBio">
        <title>ACBD3 interaction with TBC1 domain 22 protein is differentially affected by enteroviral and kobuviral 3A protein binding.</title>
        <authorList>
            <person name="Greninger A.L."/>
            <person name="Knudsen G.M."/>
            <person name="Betegon M."/>
            <person name="Burlingame A.L."/>
            <person name="DeRisi J.L."/>
        </authorList>
    </citation>
    <scope>PROTEIN SEQUENCE OF 1-10; 29-50; 62-77; 133-198 AND 228-247</scope>
    <scope>INTERACTION WITH PI4KB; TBC1D22A AND TBC1D22B</scope>
    <scope>IDENTIFICATION BY MASS SPECTROMETRY</scope>
</reference>
<reference key="7">
    <citation type="submission" date="2008-12" db="UniProtKB">
        <authorList>
            <person name="Bienvenut W.V."/>
            <person name="Boldt K."/>
            <person name="von Kriegsheim A.F."/>
            <person name="Zebisch A."/>
            <person name="Kolch W."/>
        </authorList>
    </citation>
    <scope>PROTEIN SEQUENCE OF 1-10; 13-56; 62-69; 133-172 AND 199-227</scope>
    <scope>CLEAVAGE OF INITIATOR METHIONINE</scope>
    <scope>ACETYLATION AT MET-1 AND VAL-2</scope>
    <scope>PHOSPHORYLATION AT THR-145</scope>
    <scope>IDENTIFICATION BY MASS SPECTROMETRY</scope>
    <source>
        <tissue>Colon carcinoma</tissue>
        <tissue>Hepatoma</tissue>
    </source>
</reference>
<reference key="8">
    <citation type="journal article" date="2003" name="Nat. Biotechnol.">
        <title>Exploring proteomes and analyzing protein processing by mass spectrometric identification of sorted N-terminal peptides.</title>
        <authorList>
            <person name="Gevaert K."/>
            <person name="Goethals M."/>
            <person name="Martens L."/>
            <person name="Van Damme J."/>
            <person name="Staes A."/>
            <person name="Thomas G.R."/>
            <person name="Vandekerckhove J."/>
        </authorList>
    </citation>
    <scope>PROTEIN SEQUENCE OF 2-12</scope>
    <source>
        <tissue>Platelet</tissue>
    </source>
</reference>
<reference key="9">
    <citation type="submission" date="2005-11" db="UniProtKB">
        <authorList>
            <person name="Bienvenut W.V."/>
            <person name="Claeys D."/>
        </authorList>
    </citation>
    <scope>PROTEIN SEQUENCE OF 2-10; 13-19; 29-42; 62-69; 133-143 AND 218-227</scope>
    <scope>CLEAVAGE OF INITIATOR METHIONINE</scope>
    <scope>ACETYLATION AT VAL-2</scope>
    <scope>IDENTIFICATION BY MASS SPECTROMETRY</scope>
    <source>
        <tissue>Platelet</tissue>
    </source>
</reference>
<reference key="10">
    <citation type="submission" date="2008-12" db="UniProtKB">
        <authorList>
            <person name="Lubec G."/>
            <person name="Vishwanath V."/>
            <person name="Chen W.-Q."/>
            <person name="Sun Y."/>
        </authorList>
    </citation>
    <scope>PROTEIN SEQUENCE OF 92-110; 199-217 AND 228-247</scope>
    <scope>IDENTIFICATION BY MASS SPECTROMETRY</scope>
    <source>
        <tissue>Brain</tissue>
        <tissue>Cajal-Retzius cell</tissue>
        <tissue>Fetal brain cortex</tissue>
    </source>
</reference>
<reference key="11">
    <citation type="journal article" date="2001" name="Proc. Natl. Acad. Sci. U.S.A.">
        <title>Role of a pineal cAMP-operated arylalkylamine N-acetyltransferase/14-3-3-binding switch in melatonin synthesis.</title>
        <authorList>
            <person name="Ganguly S."/>
            <person name="Gastel J.A."/>
            <person name="Weller J.L."/>
            <person name="Schwartz C."/>
            <person name="Jaffe H."/>
            <person name="Namboodiri M.A."/>
            <person name="Coon S.L."/>
            <person name="Hickman A.B."/>
            <person name="Rollag M."/>
            <person name="Obsil T."/>
            <person name="Beauverger P."/>
            <person name="Ferry G."/>
            <person name="Boutin J.A."/>
            <person name="Klein D.C."/>
        </authorList>
    </citation>
    <scope>INTERACTION WITH AANAT</scope>
</reference>
<reference key="12">
    <citation type="journal article" date="2003" name="J. Biol. Chem.">
        <title>Proteomics-based target identification: bengamides as a new class of methionine aminopeptidase inhibitors.</title>
        <authorList>
            <person name="Towbin H."/>
            <person name="Bair K.W."/>
            <person name="DeCaprio J.A."/>
            <person name="Eck M.J."/>
            <person name="Kim S."/>
            <person name="Kinder F.R."/>
            <person name="Morollo A."/>
            <person name="Mueller D.R."/>
            <person name="Schindler P."/>
            <person name="Song H.K."/>
            <person name="van Oostrum J."/>
            <person name="Versace R.W."/>
            <person name="Voshol H."/>
            <person name="Wood J."/>
            <person name="Zabludoff S."/>
            <person name="Phillips P.E."/>
        </authorList>
    </citation>
    <scope>CLEAVAGE OF INITIATOR METHIONINE</scope>
    <scope>ACETYLATION AT VAL-2</scope>
    <scope>IDENTIFICATION BY MASS SPECTROMETRY</scope>
</reference>
<reference key="13">
    <citation type="journal article" date="2003" name="Nature">
        <title>Proteomic characterization of the human centrosome by protein correlation profiling.</title>
        <authorList>
            <person name="Andersen J.S."/>
            <person name="Wilkinson C.J."/>
            <person name="Mayor T."/>
            <person name="Mortensen P."/>
            <person name="Nigg E.A."/>
            <person name="Mann M."/>
        </authorList>
    </citation>
    <scope>IDENTIFICATION BY MASS SPECTROMETRY</scope>
    <source>
        <tissue>Lymphoblast</tissue>
    </source>
</reference>
<reference key="14">
    <citation type="journal article" date="2004" name="Cell">
        <title>The CREB coactivator TORC2 functions as a calcium- and cAMP-sensitive coincidence detector.</title>
        <authorList>
            <person name="Screaton R.A."/>
            <person name="Conkright M.D."/>
            <person name="Katoh Y."/>
            <person name="Best J.L."/>
            <person name="Canettieri G."/>
            <person name="Jeffries S."/>
            <person name="Guzman E."/>
            <person name="Niessen S."/>
            <person name="Yates J.R. III"/>
            <person name="Takemori H."/>
            <person name="Okamoto M."/>
            <person name="Montminy M."/>
        </authorList>
    </citation>
    <scope>INTERACTION WITH CRTC2</scope>
</reference>
<reference key="15">
    <citation type="journal article" date="2004" name="J. Cell Biol.">
        <title>A pathway of neuregulin-induced activation of cofilin-phosphatase Slingshot and cofilin in lamellipodia.</title>
        <authorList>
            <person name="Nagata-Ohashi K."/>
            <person name="Ohta Y."/>
            <person name="Goto K."/>
            <person name="Chiba S."/>
            <person name="Mori R."/>
            <person name="Nishita M."/>
            <person name="Ohashi K."/>
            <person name="Kousaka K."/>
            <person name="Iwamatsu A."/>
            <person name="Niwa R."/>
            <person name="Uemura T."/>
            <person name="Mizuno K."/>
        </authorList>
    </citation>
    <scope>INTERACTION WITH SSH1</scope>
</reference>
<reference key="16">
    <citation type="journal article" date="2005" name="Nat. Cell Biol.">
        <title>JNK phosphorylation of 14-3-3 proteins regulates nuclear targeting of c-Abl in the apoptotic response to DNA damage.</title>
        <authorList>
            <person name="Yoshida K."/>
            <person name="Yamaguchi T."/>
            <person name="Natsume T."/>
            <person name="Kufe D."/>
            <person name="Miki Y."/>
        </authorList>
    </citation>
    <scope>FUNCTION</scope>
    <scope>INTERACTION WITH ABL1</scope>
    <scope>IDENTIFICATION BY MASS SPECTROMETRY</scope>
</reference>
<reference key="17">
    <citation type="journal article" date="2006" name="EMBO J.">
        <title>14-3-3gamma binds to MDMX that is phosphorylated by UV-activated Chk1, resulting in p53 activation.</title>
        <authorList>
            <person name="Jin Y."/>
            <person name="Dai M.S."/>
            <person name="Lu S.Z."/>
            <person name="Xu Y."/>
            <person name="Luo Z."/>
            <person name="Zhao Y."/>
            <person name="Lu H."/>
        </authorList>
    </citation>
    <scope>FUNCTION IN TP53 ACTIVATION</scope>
    <scope>INTERACTION WITH MDM4</scope>
</reference>
<reference key="18">
    <citation type="journal article" date="2006" name="Mol. Cell. Proteomics">
        <title>Transgenic mouse proteomics identifies new 14-3-3-associated proteins involved in cytoskeletal rearrangements and cell signaling.</title>
        <authorList>
            <person name="Angrand P.O."/>
            <person name="Segura I."/>
            <person name="Voelkel P."/>
            <person name="Ghidelli S."/>
            <person name="Terry R."/>
            <person name="Brajenovic M."/>
            <person name="Vintersten K."/>
            <person name="Klein R."/>
            <person name="Superti-Furga G."/>
            <person name="Drewes G."/>
            <person name="Kuster B."/>
            <person name="Bouwmeester T."/>
            <person name="Acker-Palmer A."/>
        </authorList>
    </citation>
    <scope>INTERACTION WITH MARK2 AND MARK3</scope>
</reference>
<reference key="19">
    <citation type="journal article" date="2008" name="Biochem. Biophys. Res. Commun.">
        <title>Sirt2 interacts with 14-3-3 beta/gamma and down-regulates the activity of p53.</title>
        <authorList>
            <person name="Jin Y.H."/>
            <person name="Kim Y.J."/>
            <person name="Kim D.W."/>
            <person name="Baek K.H."/>
            <person name="Kang B.Y."/>
            <person name="Yeo C.Y."/>
            <person name="Lee K.Y."/>
        </authorList>
    </citation>
    <scope>INTERACTION WITH SIRT2</scope>
</reference>
<reference key="20">
    <citation type="journal article" date="2008" name="EMBO J.">
        <title>Phosphorylation-dependent binding of 14-3-3 terminates signalling by the Gab2 docking protein.</title>
        <authorList>
            <person name="Brummer T."/>
            <person name="Larance M."/>
            <person name="Herrera Abreu M.T."/>
            <person name="Lyons R.J."/>
            <person name="Timpson P."/>
            <person name="Emmerich C.H."/>
            <person name="Fleuren E.D.G."/>
            <person name="Lehrbach G.M."/>
            <person name="Schramek D."/>
            <person name="Guilhaus M."/>
            <person name="James D.E."/>
            <person name="Daly R.J."/>
        </authorList>
    </citation>
    <scope>INTERACTION WITH GAB2</scope>
</reference>
<reference key="21">
    <citation type="journal article" date="2009" name="Anal. Chem.">
        <title>Lys-N and trypsin cover complementary parts of the phosphoproteome in a refined SCX-based approach.</title>
        <authorList>
            <person name="Gauci S."/>
            <person name="Helbig A.O."/>
            <person name="Slijper M."/>
            <person name="Krijgsveld J."/>
            <person name="Heck A.J."/>
            <person name="Mohammed S."/>
        </authorList>
    </citation>
    <scope>ACETYLATION [LARGE SCALE ANALYSIS] AT VAL-2</scope>
    <scope>CLEAVAGE OF INITIATOR METHIONINE [LARGE SCALE ANALYSIS]</scope>
    <scope>IDENTIFICATION BY MASS SPECTROMETRY [LARGE SCALE ANALYSIS]</scope>
</reference>
<reference key="22">
    <citation type="journal article" date="2009" name="Biol. Psychiatry">
        <title>SLITRK1 binds 14-3-3 and regulates neurite outgrowth in a phosphorylation-dependent manner.</title>
        <authorList>
            <person name="Kajiwara Y."/>
            <person name="Buxbaum J.D."/>
            <person name="Grice D.E."/>
        </authorList>
    </citation>
    <scope>INTERACTION WITH SLITRK1</scope>
</reference>
<reference key="23">
    <citation type="journal article" date="2009" name="Sci. Signal.">
        <title>Quantitative phosphoproteomic analysis of T cell receptor signaling reveals system-wide modulation of protein-protein interactions.</title>
        <authorList>
            <person name="Mayya V."/>
            <person name="Lundgren D.H."/>
            <person name="Hwang S.-I."/>
            <person name="Rezaul K."/>
            <person name="Wu L."/>
            <person name="Eng J.K."/>
            <person name="Rodionov V."/>
            <person name="Han D.K."/>
        </authorList>
    </citation>
    <scope>IDENTIFICATION BY MASS SPECTROMETRY [LARGE SCALE ANALYSIS]</scope>
    <source>
        <tissue>Leukemic T-cell</tissue>
    </source>
</reference>
<reference key="24">
    <citation type="journal article" date="2010" name="Sci. Signal.">
        <title>Quantitative phosphoproteomics reveals widespread full phosphorylation site occupancy during mitosis.</title>
        <authorList>
            <person name="Olsen J.V."/>
            <person name="Vermeulen M."/>
            <person name="Santamaria A."/>
            <person name="Kumar C."/>
            <person name="Miller M.L."/>
            <person name="Jensen L.J."/>
            <person name="Gnad F."/>
            <person name="Cox J."/>
            <person name="Jensen T.S."/>
            <person name="Nigg E.A."/>
            <person name="Brunak S."/>
            <person name="Mann M."/>
        </authorList>
    </citation>
    <scope>IDENTIFICATION BY MASS SPECTROMETRY [LARGE SCALE ANALYSIS]</scope>
    <source>
        <tissue>Cervix carcinoma</tissue>
    </source>
</reference>
<reference key="25">
    <citation type="journal article" date="2011" name="BMC Syst. Biol.">
        <title>Initial characterization of the human central proteome.</title>
        <authorList>
            <person name="Burkard T.R."/>
            <person name="Planyavsky M."/>
            <person name="Kaupe I."/>
            <person name="Breitwieser F.P."/>
            <person name="Buerckstuemmer T."/>
            <person name="Bennett K.L."/>
            <person name="Superti-Furga G."/>
            <person name="Colinge J."/>
        </authorList>
    </citation>
    <scope>IDENTIFICATION BY MASS SPECTROMETRY [LARGE SCALE ANALYSIS]</scope>
</reference>
<reference key="26">
    <citation type="journal article" date="2012" name="Sci. Rep.">
        <title>Identification of 14-3-3gamma as a Mieap-interacting protein and its role in mitochondrial quality control.</title>
        <authorList>
            <person name="Miyamoto T."/>
            <person name="Kitamura N."/>
            <person name="Ono M."/>
            <person name="Nakamura Y."/>
            <person name="Yoshida M."/>
            <person name="Kamino H."/>
            <person name="Murai R."/>
            <person name="Yamada T."/>
            <person name="Arakawa H."/>
        </authorList>
    </citation>
    <scope>FUNCTION</scope>
    <scope>INTERACTION WITH SPATA18</scope>
    <scope>SUBCELLULAR LOCATION</scope>
</reference>
<reference key="27">
    <citation type="journal article" date="2013" name="J. Proteome Res.">
        <title>Toward a comprehensive characterization of a human cancer cell phosphoproteome.</title>
        <authorList>
            <person name="Zhou H."/>
            <person name="Di Palma S."/>
            <person name="Preisinger C."/>
            <person name="Peng M."/>
            <person name="Polat A.N."/>
            <person name="Heck A.J."/>
            <person name="Mohammed S."/>
        </authorList>
    </citation>
    <scope>PHOSPHORYLATION [LARGE SCALE ANALYSIS] AT SER-71</scope>
    <scope>IDENTIFICATION BY MASS SPECTROMETRY [LARGE SCALE ANALYSIS]</scope>
    <source>
        <tissue>Erythroleukemia</tissue>
    </source>
</reference>
<reference key="28">
    <citation type="journal article" date="2014" name="J. Proteomics">
        <title>An enzyme assisted RP-RPLC approach for in-depth analysis of human liver phosphoproteome.</title>
        <authorList>
            <person name="Bian Y."/>
            <person name="Song C."/>
            <person name="Cheng K."/>
            <person name="Dong M."/>
            <person name="Wang F."/>
            <person name="Huang J."/>
            <person name="Sun D."/>
            <person name="Wang L."/>
            <person name="Ye M."/>
            <person name="Zou H."/>
        </authorList>
    </citation>
    <scope>PHOSPHORYLATION [LARGE SCALE ANALYSIS] AT THR-234 AND SER-235</scope>
    <scope>IDENTIFICATION BY MASS SPECTROMETRY [LARGE SCALE ANALYSIS]</scope>
    <source>
        <tissue>Liver</tissue>
    </source>
</reference>
<reference key="29">
    <citation type="journal article" date="2015" name="Biochem. Biophys. Res. Commun.">
        <title>Suppression of death-associated protein kinase 2 by interaction with 14-3-3 proteins.</title>
        <authorList>
            <person name="Yuasa K."/>
            <person name="Ota R."/>
            <person name="Matsuda S."/>
            <person name="Isshiki K."/>
            <person name="Inoue M."/>
            <person name="Tsuji A."/>
        </authorList>
    </citation>
    <scope>INTERACTION WITH DAPK2</scope>
</reference>
<reference key="30">
    <citation type="journal article" date="2015" name="Proteomics">
        <title>N-terminome analysis of the human mitochondrial proteome.</title>
        <authorList>
            <person name="Vaca Jacome A.S."/>
            <person name="Rabilloud T."/>
            <person name="Schaeffer-Reiss C."/>
            <person name="Rompais M."/>
            <person name="Ayoub D."/>
            <person name="Lane L."/>
            <person name="Bairoch A."/>
            <person name="Van Dorsselaer A."/>
            <person name="Carapito C."/>
        </authorList>
    </citation>
    <scope>IDENTIFICATION BY MASS SPECTROMETRY [LARGE SCALE ANALYSIS]</scope>
</reference>
<reference key="31">
    <citation type="journal article" date="2016" name="Sci. Transl. Med.">
        <title>Familial autoinflammation with neutrophilic dermatosis reveals a regulatory mechanism of pyrin activation.</title>
        <authorList>
            <person name="Masters S.L."/>
            <person name="Lagou V."/>
            <person name="Jeru I."/>
            <person name="Baker P.J."/>
            <person name="Van Eyck L."/>
            <person name="Parry D.A."/>
            <person name="Lawless D."/>
            <person name="De Nardo D."/>
            <person name="Garcia-Perez J.E."/>
            <person name="Dagley L.F."/>
            <person name="Holley C.L."/>
            <person name="Dooley J."/>
            <person name="Moghaddas F."/>
            <person name="Pasciuto E."/>
            <person name="Jeandel P.Y."/>
            <person name="Sciot R."/>
            <person name="Lyras D."/>
            <person name="Webb A.I."/>
            <person name="Nicholson S.E."/>
            <person name="De Somer L."/>
            <person name="van Nieuwenhove E."/>
            <person name="Ruuth-Praz J."/>
            <person name="Copin B."/>
            <person name="Cochet E."/>
            <person name="Medlej-Hashim M."/>
            <person name="Megarbane A."/>
            <person name="Schroder K."/>
            <person name="Savic S."/>
            <person name="Goris A."/>
            <person name="Amselem S."/>
            <person name="Wouters C."/>
            <person name="Liston A."/>
        </authorList>
    </citation>
    <scope>INTERACTION WITH MEFV</scope>
</reference>
<reference key="32">
    <citation type="journal article" date="2017" name="Biochem. J.">
        <title>Structural interface between LRRK2 and 14-3-3 protein.</title>
        <authorList>
            <person name="Stevers L.M."/>
            <person name="de Vries R.M."/>
            <person name="Doveston R.G."/>
            <person name="Milroy L.G."/>
            <person name="Brunsveld L."/>
            <person name="Ottmann C."/>
        </authorList>
    </citation>
    <scope>INTERACTION WITH LRRK2</scope>
</reference>
<reference key="33">
    <citation type="journal article" date="2017" name="Mol. Brain">
        <title>Direct interaction with 14-3-3gamma promotes surface expression of Best1 channel in astrocyte.</title>
        <authorList>
            <person name="Oh S.J."/>
            <person name="Woo J."/>
            <person name="Lee Y.S."/>
            <person name="Cho M."/>
            <person name="Kim E."/>
            <person name="Cho N.C."/>
            <person name="Park J.Y."/>
            <person name="Pae A.N."/>
            <person name="Justin Lee C."/>
            <person name="Hwang E.M."/>
        </authorList>
    </citation>
    <scope>INTERACTION WITH BEST1</scope>
</reference>
<reference key="34">
    <citation type="journal article" date="2019" name="Int. J. Mol. Sci.">
        <title>Evidence for the Desmosomal Cadherin Desmoglein-3 in Regulating YAP and Phospho-YAP in Keratinocyte Responses to Mechanical Forces.</title>
        <authorList>
            <person name="Uttagomol J."/>
            <person name="Ahmad U.S."/>
            <person name="Rehman A."/>
            <person name="Huang Y."/>
            <person name="Laly A.C."/>
            <person name="Kang A."/>
            <person name="Soetaert J."/>
            <person name="Chance R."/>
            <person name="Teh M.T."/>
            <person name="Connelly J.T."/>
            <person name="Wan H."/>
        </authorList>
    </citation>
    <scope>IDENTIFICATION IN A COMPLEX DSG3; PKP1 AND YAP1</scope>
    <scope>INTERACTION WITH DSG3; PKP1 AND YAP1</scope>
</reference>
<reference key="35">
    <citation type="journal article" date="2018" name="J. Cell Sci.">
        <title>14-3-3 proteins regulate desmosomal adhesion via plakophilins.</title>
        <authorList>
            <person name="Rietscher K."/>
            <person name="Keil R."/>
            <person name="Jordan A."/>
            <person name="Hatzfeld M."/>
        </authorList>
    </citation>
    <scope>FUNCTION</scope>
    <scope>INTERACTION WITH PKP1</scope>
</reference>
<reference key="36">
    <citation type="journal article" date="2021" name="Nat. Commun.">
        <title>Endonuclease G promotes autophagy by suppressing mTOR signaling and activating the DNA damage response.</title>
        <authorList>
            <person name="Wang W."/>
            <person name="Li J."/>
            <person name="Tan J."/>
            <person name="Wang M."/>
            <person name="Yang J."/>
            <person name="Zhang Z.M."/>
            <person name="Li C."/>
            <person name="Basnakian A.G."/>
            <person name="Tang H.W."/>
            <person name="Perrimon N."/>
            <person name="Zhou Q."/>
        </authorList>
    </citation>
    <scope>INTERACTION WITH ENDOG; TSC2 AND PIK3C3</scope>
</reference>
<reference key="37">
    <citation type="journal article" date="2023" name="Nat. Metab.">
        <title>AMPK-dependent phosphorylation of the GATOR2 component WDR24 suppresses glucose-mediated mTORC1 activation.</title>
        <authorList>
            <person name="Dai X."/>
            <person name="Jiang C."/>
            <person name="Jiang Q."/>
            <person name="Fang L."/>
            <person name="Yu H."/>
            <person name="Guo J."/>
            <person name="Yan P."/>
            <person name="Chi F."/>
            <person name="Zhang T."/>
            <person name="Inuzuka H."/>
            <person name="Asara J.M."/>
            <person name="Wang P."/>
            <person name="Guo J."/>
            <person name="Wei W."/>
        </authorList>
    </citation>
    <scope>FUNCTION</scope>
    <scope>INTERACTION WITH WDR24</scope>
</reference>
<reference key="38">
    <citation type="journal article" date="2017" name="Am. J. Hum. Genet.">
        <title>De novo mutations in YWHAG cause early-onset epilepsy.</title>
        <authorList>
            <consortium name="Epilepsy Genomics Study"/>
            <consortium name="Deciphering Developmental Disorders Study"/>
            <person name="Guella I."/>
            <person name="McKenzie M.B."/>
            <person name="Evans D.M."/>
            <person name="Buerki S.E."/>
            <person name="Toyota E.B."/>
            <person name="Van Allen M.I."/>
            <person name="Suri M."/>
            <person name="Elmslie F."/>
            <person name="Simon M.E.H."/>
            <person name="van Gassen K.L.I."/>
            <person name="Heron D."/>
            <person name="Keren B."/>
            <person name="Nava C."/>
            <person name="Connolly M.B."/>
            <person name="Demos M."/>
            <person name="Farrer M.J."/>
        </authorList>
    </citation>
    <scope>INVOLVEMENT IN DEE56</scope>
    <scope>VARIANTS DEE56 ALA-15; GLU-129 AND CYS-132</scope>
    <scope>VARIANTS GLN-50 AND SER-133</scope>
</reference>
<reference key="39">
    <citation type="journal article" date="2006" name="Proc. Natl. Acad. Sci. U.S.A.">
        <title>Structural basis for protein-protein interactions in the 14-3-3 protein family.</title>
        <authorList>
            <person name="Yang X."/>
            <person name="Lee W.H."/>
            <person name="Sobott F."/>
            <person name="Papagrigoriou E."/>
            <person name="Robinson C.V."/>
            <person name="Grossmann J.G."/>
            <person name="Sundstroem M."/>
            <person name="Doyle D.A."/>
            <person name="Elkins J.M."/>
        </authorList>
    </citation>
    <scope>X-RAY CRYSTALLOGRAPHY (2.55 ANGSTROMS)</scope>
    <scope>IDENTIFICATION BY MASS SPECTROMETRY</scope>
    <scope>INTERACTION WITH PHOSPHOSERINE MOTIFS</scope>
    <scope>SUBUNIT</scope>
</reference>
<organism>
    <name type="scientific">Homo sapiens</name>
    <name type="common">Human</name>
    <dbReference type="NCBI Taxonomy" id="9606"/>
    <lineage>
        <taxon>Eukaryota</taxon>
        <taxon>Metazoa</taxon>
        <taxon>Chordata</taxon>
        <taxon>Craniata</taxon>
        <taxon>Vertebrata</taxon>
        <taxon>Euteleostomi</taxon>
        <taxon>Mammalia</taxon>
        <taxon>Eutheria</taxon>
        <taxon>Euarchontoglires</taxon>
        <taxon>Primates</taxon>
        <taxon>Haplorrhini</taxon>
        <taxon>Catarrhini</taxon>
        <taxon>Hominidae</taxon>
        <taxon>Homo</taxon>
    </lineage>
</organism>
<feature type="chain" id="PRO_0000367907" description="14-3-3 protein gamma">
    <location>
        <begin position="1"/>
        <end position="247"/>
    </location>
</feature>
<feature type="initiator methionine" description="Removed; alternate" evidence="6 7 28 29 32">
    <location>
        <position position="1"/>
    </location>
</feature>
<feature type="chain" id="PRO_0000058606" description="14-3-3 protein gamma, N-terminally processed">
    <location>
        <begin position="2"/>
        <end position="247"/>
    </location>
</feature>
<feature type="region of interest" description="Interaction with SPATA18/MIEAP" evidence="17">
    <location>
        <begin position="2"/>
        <end position="247"/>
    </location>
</feature>
<feature type="region of interest" description="Required for interaction with SPATA18/MIEAP (isoform 2) but dispensable for binding to SPATA18/MIEAP (isoform 1)" evidence="17">
    <location>
        <begin position="2"/>
        <end position="166"/>
    </location>
</feature>
<feature type="site" description="Interaction with phosphoserine on interacting protein" evidence="13">
    <location>
        <position position="57"/>
    </location>
</feature>
<feature type="site" description="Interaction with phosphoserine on interacting protein" evidence="13">
    <location>
        <position position="132"/>
    </location>
</feature>
<feature type="modified residue" description="N-acetylmethionine; in 14-3-3 protein gamma; alternate; partial" evidence="28">
    <location>
        <position position="1"/>
    </location>
</feature>
<feature type="modified residue" description="N-acetylvaline; in 14-3-3 protein gamma, N-terminally processed; partial" evidence="7 28 29 32">
    <location>
        <position position="2"/>
    </location>
</feature>
<feature type="modified residue" description="N-acetylvaline; partial" evidence="7 28 29 32">
    <location>
        <position position="2"/>
    </location>
</feature>
<feature type="modified residue" description="Phosphoserine" evidence="33">
    <location>
        <position position="71"/>
    </location>
</feature>
<feature type="modified residue" description="Phosphotyrosine" evidence="2">
    <location>
        <position position="133"/>
    </location>
</feature>
<feature type="modified residue" description="Phosphothreonine" evidence="28">
    <location>
        <position position="145"/>
    </location>
</feature>
<feature type="modified residue" description="Phosphoserine" evidence="2">
    <location>
        <position position="215"/>
    </location>
</feature>
<feature type="modified residue" description="Phosphothreonine" evidence="34">
    <location>
        <position position="234"/>
    </location>
</feature>
<feature type="modified residue" description="Phosphoserine" evidence="34">
    <location>
        <position position="235"/>
    </location>
</feature>
<feature type="sequence variant" id="VAR_080224" description="In DEE56; uncertain significance; dbSNP:rs1554618767." evidence="22">
    <original>E</original>
    <variation>A</variation>
    <location>
        <position position="15"/>
    </location>
</feature>
<feature type="sequence variant" id="VAR_080225" description="Found in an individual with autism; uncertain significance; dbSNP:rs1554616652." evidence="22">
    <original>K</original>
    <variation>Q</variation>
    <location>
        <position position="50"/>
    </location>
</feature>
<feature type="sequence variant" id="VAR_080226" description="In DEE56; dbSNP:rs1554616630." evidence="22">
    <original>D</original>
    <variation>E</variation>
    <location>
        <position position="129"/>
    </location>
</feature>
<feature type="sequence variant" id="VAR_080227" description="In DEE56; dbSNP:rs1554616628." evidence="22">
    <original>R</original>
    <variation>C</variation>
    <location>
        <position position="132"/>
    </location>
</feature>
<feature type="sequence variant" id="VAR_080228" description="Found in an individual with neurodevelopmental disorder; likely pathogenic; dbSNP:rs1554616627." evidence="22">
    <original>Y</original>
    <variation>S</variation>
    <location>
        <position position="133"/>
    </location>
</feature>
<feature type="sequence conflict" description="In Ref. 1; AAD48408." evidence="30" ref="1">
    <original>R</original>
    <variation>P</variation>
    <location>
        <position position="4"/>
    </location>
</feature>
<feature type="sequence conflict" description="In Ref. 1; AAD48408." evidence="30" ref="1">
    <original>R</original>
    <variation>G</variation>
    <location>
        <position position="19"/>
    </location>
</feature>
<feature type="sequence conflict" description="In Ref. 1; AAD48408." evidence="30" ref="1">
    <location>
        <position position="78"/>
    </location>
</feature>
<feature type="sequence conflict" description="In Ref. 1; AAD48408." evidence="30" ref="1">
    <original>I</original>
    <variation>V</variation>
    <location>
        <position position="89"/>
    </location>
</feature>
<feature type="sequence conflict" description="In Ref. 1; AAD48408." evidence="30" ref="1">
    <original>L</original>
    <variation>V</variation>
    <location>
        <position position="104"/>
    </location>
</feature>
<feature type="sequence conflict" description="In Ref. 1; AAD48408." evidence="30" ref="1">
    <original>I</original>
    <variation>Y</variation>
    <location>
        <position position="109"/>
    </location>
</feature>
<feature type="sequence conflict" description="In Ref. 1; AAD48408." evidence="30" ref="1">
    <original>SKVF</original>
    <variation>RKDL</variation>
    <location>
        <begin position="119"/>
        <end position="122"/>
    </location>
</feature>
<feature type="sequence conflict" description="In Ref. 1; AAD48408." evidence="30" ref="1">
    <original>AT</original>
    <variation>GD</variation>
    <location>
        <begin position="144"/>
        <end position="145"/>
    </location>
</feature>
<feature type="sequence conflict" description="In Ref. 1; AAD48408." evidence="30" ref="1">
    <original>AH</original>
    <variation>R</variation>
    <location>
        <begin position="157"/>
        <end position="158"/>
    </location>
</feature>
<feature type="sequence conflict" description="In Ref. 1; AAD48408." evidence="30" ref="1">
    <original>AFD</original>
    <variation>EFE</variation>
    <location>
        <begin position="200"/>
        <end position="202"/>
    </location>
</feature>
<feature type="sequence conflict" description="In Ref. 1; AAD48408." evidence="30" ref="1">
    <original>D</original>
    <variation>E</variation>
    <location>
        <position position="214"/>
    </location>
</feature>
<feature type="sequence conflict" description="In Ref. 1; AAD48408." evidence="30" ref="1">
    <original>D</original>
    <variation>DH</variation>
    <location>
        <position position="240"/>
    </location>
</feature>
<feature type="helix" evidence="36">
    <location>
        <begin position="4"/>
        <end position="16"/>
    </location>
</feature>
<feature type="helix" evidence="36">
    <location>
        <begin position="20"/>
        <end position="31"/>
    </location>
</feature>
<feature type="turn" evidence="38">
    <location>
        <begin position="32"/>
        <end position="34"/>
    </location>
</feature>
<feature type="helix" evidence="36">
    <location>
        <begin position="39"/>
        <end position="69"/>
    </location>
</feature>
<feature type="turn" evidence="37">
    <location>
        <begin position="71"/>
        <end position="74"/>
    </location>
</feature>
<feature type="helix" evidence="36">
    <location>
        <begin position="77"/>
        <end position="106"/>
    </location>
</feature>
<feature type="turn" evidence="36">
    <location>
        <begin position="107"/>
        <end position="111"/>
    </location>
</feature>
<feature type="helix" evidence="36">
    <location>
        <begin position="117"/>
        <end position="137"/>
    </location>
</feature>
<feature type="helix" evidence="36">
    <location>
        <begin position="140"/>
        <end position="164"/>
    </location>
</feature>
<feature type="helix" evidence="36">
    <location>
        <begin position="170"/>
        <end position="185"/>
    </location>
</feature>
<feature type="helix" evidence="36">
    <location>
        <begin position="190"/>
        <end position="206"/>
    </location>
</feature>
<feature type="helix" evidence="36">
    <location>
        <begin position="207"/>
        <end position="210"/>
    </location>
</feature>
<feature type="turn" evidence="36">
    <location>
        <begin position="213"/>
        <end position="215"/>
    </location>
</feature>
<feature type="helix" evidence="36">
    <location>
        <begin position="216"/>
        <end position="233"/>
    </location>
</feature>
<feature type="helix" evidence="35">
    <location>
        <begin position="237"/>
        <end position="240"/>
    </location>
</feature>
<proteinExistence type="evidence at protein level"/>
<evidence type="ECO:0000250" key="1">
    <source>
        <dbReference type="UniProtKB" id="P61982"/>
    </source>
</evidence>
<evidence type="ECO:0000250" key="2">
    <source>
        <dbReference type="UniProtKB" id="P61983"/>
    </source>
</evidence>
<evidence type="ECO:0000269" key="3">
    <source>
    </source>
</evidence>
<evidence type="ECO:0000269" key="4">
    <source>
    </source>
</evidence>
<evidence type="ECO:0000269" key="5">
    <source>
    </source>
</evidence>
<evidence type="ECO:0000269" key="6">
    <source>
    </source>
</evidence>
<evidence type="ECO:0000269" key="7">
    <source>
    </source>
</evidence>
<evidence type="ECO:0000269" key="8">
    <source>
    </source>
</evidence>
<evidence type="ECO:0000269" key="9">
    <source>
    </source>
</evidence>
<evidence type="ECO:0000269" key="10">
    <source>
    </source>
</evidence>
<evidence type="ECO:0000269" key="11">
    <source>
    </source>
</evidence>
<evidence type="ECO:0000269" key="12">
    <source>
    </source>
</evidence>
<evidence type="ECO:0000269" key="13">
    <source>
    </source>
</evidence>
<evidence type="ECO:0000269" key="14">
    <source>
    </source>
</evidence>
<evidence type="ECO:0000269" key="15">
    <source>
    </source>
</evidence>
<evidence type="ECO:0000269" key="16">
    <source>
    </source>
</evidence>
<evidence type="ECO:0000269" key="17">
    <source>
    </source>
</evidence>
<evidence type="ECO:0000269" key="18">
    <source>
    </source>
</evidence>
<evidence type="ECO:0000269" key="19">
    <source>
    </source>
</evidence>
<evidence type="ECO:0000269" key="20">
    <source>
    </source>
</evidence>
<evidence type="ECO:0000269" key="21">
    <source>
    </source>
</evidence>
<evidence type="ECO:0000269" key="22">
    <source>
    </source>
</evidence>
<evidence type="ECO:0000269" key="23">
    <source>
    </source>
</evidence>
<evidence type="ECO:0000269" key="24">
    <source>
    </source>
</evidence>
<evidence type="ECO:0000269" key="25">
    <source>
    </source>
</evidence>
<evidence type="ECO:0000269" key="26">
    <source>
    </source>
</evidence>
<evidence type="ECO:0000269" key="27">
    <source>
    </source>
</evidence>
<evidence type="ECO:0000269" key="28">
    <source ref="7"/>
</evidence>
<evidence type="ECO:0000269" key="29">
    <source ref="9"/>
</evidence>
<evidence type="ECO:0000305" key="30"/>
<evidence type="ECO:0000312" key="31">
    <source>
        <dbReference type="HGNC" id="HGNC:12852"/>
    </source>
</evidence>
<evidence type="ECO:0007744" key="32">
    <source>
    </source>
</evidence>
<evidence type="ECO:0007744" key="33">
    <source>
    </source>
</evidence>
<evidence type="ECO:0007744" key="34">
    <source>
    </source>
</evidence>
<evidence type="ECO:0007829" key="35">
    <source>
        <dbReference type="PDB" id="6BYL"/>
    </source>
</evidence>
<evidence type="ECO:0007829" key="36">
    <source>
        <dbReference type="PDB" id="6S9K"/>
    </source>
</evidence>
<evidence type="ECO:0007829" key="37">
    <source>
        <dbReference type="PDB" id="6SAD"/>
    </source>
</evidence>
<evidence type="ECO:0007829" key="38">
    <source>
        <dbReference type="PDB" id="6ZBT"/>
    </source>
</evidence>
<accession>P61981</accession>
<accession>O70457</accession>
<accession>P35214</accession>
<accession>Q6FH52</accession>
<accession>Q9UDP2</accession>
<accession>Q9UN99</accession>